<gene>
    <name type="primary">DNMT1</name>
    <name type="synonym">AIM</name>
    <name type="synonym">CXXC9</name>
    <name type="synonym">DNMT</name>
</gene>
<keyword id="KW-0002">3D-structure</keyword>
<keyword id="KW-0007">Acetylation</keyword>
<keyword id="KW-0010">Activator</keyword>
<keyword id="KW-0025">Alternative splicing</keyword>
<keyword id="KW-0156">Chromatin regulator</keyword>
<keyword id="KW-0209">Deafness</keyword>
<keyword id="KW-0225">Disease variant</keyword>
<keyword id="KW-0238">DNA-binding</keyword>
<keyword id="KW-1017">Isopeptide bond</keyword>
<keyword id="KW-0479">Metal-binding</keyword>
<keyword id="KW-0488">Methylation</keyword>
<keyword id="KW-0489">Methyltransferase</keyword>
<keyword id="KW-0622">Neuropathy</keyword>
<keyword id="KW-0539">Nucleus</keyword>
<keyword id="KW-0597">Phosphoprotein</keyword>
<keyword id="KW-1267">Proteomics identification</keyword>
<keyword id="KW-1185">Reference proteome</keyword>
<keyword id="KW-0677">Repeat</keyword>
<keyword id="KW-0678">Repressor</keyword>
<keyword id="KW-0949">S-adenosyl-L-methionine</keyword>
<keyword id="KW-0804">Transcription</keyword>
<keyword id="KW-0805">Transcription regulation</keyword>
<keyword id="KW-0808">Transferase</keyword>
<keyword id="KW-0832">Ubl conjugation</keyword>
<keyword id="KW-0862">Zinc</keyword>
<keyword id="KW-0863">Zinc-finger</keyword>
<proteinExistence type="evidence at protein level"/>
<evidence type="ECO:0000250" key="1"/>
<evidence type="ECO:0000250" key="2">
    <source>
        <dbReference type="UniProtKB" id="P13864"/>
    </source>
</evidence>
<evidence type="ECO:0000255" key="3"/>
<evidence type="ECO:0000255" key="4">
    <source>
        <dbReference type="PROSITE-ProRule" id="PRU00370"/>
    </source>
</evidence>
<evidence type="ECO:0000255" key="5">
    <source>
        <dbReference type="PROSITE-ProRule" id="PRU00509"/>
    </source>
</evidence>
<evidence type="ECO:0000255" key="6">
    <source>
        <dbReference type="PROSITE-ProRule" id="PRU01016"/>
    </source>
</evidence>
<evidence type="ECO:0000255" key="7">
    <source>
        <dbReference type="PROSITE-ProRule" id="PRU01260"/>
    </source>
</evidence>
<evidence type="ECO:0000255" key="8">
    <source>
        <dbReference type="PROSITE-ProRule" id="PRU10018"/>
    </source>
</evidence>
<evidence type="ECO:0000256" key="9">
    <source>
        <dbReference type="SAM" id="MobiDB-lite"/>
    </source>
</evidence>
<evidence type="ECO:0000269" key="10">
    <source>
    </source>
</evidence>
<evidence type="ECO:0000269" key="11">
    <source>
    </source>
</evidence>
<evidence type="ECO:0000269" key="12">
    <source>
    </source>
</evidence>
<evidence type="ECO:0000269" key="13">
    <source>
    </source>
</evidence>
<evidence type="ECO:0000269" key="14">
    <source>
    </source>
</evidence>
<evidence type="ECO:0000269" key="15">
    <source>
    </source>
</evidence>
<evidence type="ECO:0000269" key="16">
    <source>
    </source>
</evidence>
<evidence type="ECO:0000269" key="17">
    <source>
    </source>
</evidence>
<evidence type="ECO:0000269" key="18">
    <source>
    </source>
</evidence>
<evidence type="ECO:0000269" key="19">
    <source>
    </source>
</evidence>
<evidence type="ECO:0000269" key="20">
    <source>
    </source>
</evidence>
<evidence type="ECO:0000269" key="21">
    <source>
    </source>
</evidence>
<evidence type="ECO:0000269" key="22">
    <source>
    </source>
</evidence>
<evidence type="ECO:0000269" key="23">
    <source>
    </source>
</evidence>
<evidence type="ECO:0000269" key="24">
    <source>
    </source>
</evidence>
<evidence type="ECO:0000269" key="25">
    <source>
    </source>
</evidence>
<evidence type="ECO:0000269" key="26">
    <source>
    </source>
</evidence>
<evidence type="ECO:0000269" key="27">
    <source>
    </source>
</evidence>
<evidence type="ECO:0000269" key="28">
    <source>
    </source>
</evidence>
<evidence type="ECO:0000269" key="29">
    <source>
    </source>
</evidence>
<evidence type="ECO:0000269" key="30">
    <source>
    </source>
</evidence>
<evidence type="ECO:0000269" key="31">
    <source>
    </source>
</evidence>
<evidence type="ECO:0000269" key="32">
    <source>
    </source>
</evidence>
<evidence type="ECO:0000303" key="33">
    <source>
    </source>
</evidence>
<evidence type="ECO:0000303" key="34">
    <source ref="3"/>
</evidence>
<evidence type="ECO:0000305" key="35"/>
<evidence type="ECO:0007744" key="36">
    <source>
        <dbReference type="PDB" id="3PTA"/>
    </source>
</evidence>
<evidence type="ECO:0007744" key="37">
    <source>
    </source>
</evidence>
<evidence type="ECO:0007744" key="38">
    <source>
    </source>
</evidence>
<evidence type="ECO:0007744" key="39">
    <source>
    </source>
</evidence>
<evidence type="ECO:0007744" key="40">
    <source>
    </source>
</evidence>
<evidence type="ECO:0007744" key="41">
    <source>
    </source>
</evidence>
<evidence type="ECO:0007744" key="42">
    <source>
    </source>
</evidence>
<evidence type="ECO:0007744" key="43">
    <source>
    </source>
</evidence>
<evidence type="ECO:0007744" key="44">
    <source>
    </source>
</evidence>
<evidence type="ECO:0007744" key="45">
    <source>
    </source>
</evidence>
<evidence type="ECO:0007744" key="46">
    <source>
    </source>
</evidence>
<evidence type="ECO:0007829" key="47">
    <source>
        <dbReference type="PDB" id="3EPZ"/>
    </source>
</evidence>
<evidence type="ECO:0007829" key="48">
    <source>
        <dbReference type="PDB" id="3SWR"/>
    </source>
</evidence>
<evidence type="ECO:0007829" key="49">
    <source>
        <dbReference type="PDB" id="4WXX"/>
    </source>
</evidence>
<evidence type="ECO:0007829" key="50">
    <source>
        <dbReference type="PDB" id="4YOC"/>
    </source>
</evidence>
<evidence type="ECO:0007829" key="51">
    <source>
        <dbReference type="PDB" id="5WVO"/>
    </source>
</evidence>
<evidence type="ECO:0007829" key="52">
    <source>
        <dbReference type="PDB" id="5YDR"/>
    </source>
</evidence>
<evidence type="ECO:0007829" key="53">
    <source>
        <dbReference type="PDB" id="6K3A"/>
    </source>
</evidence>
<evidence type="ECO:0007829" key="54">
    <source>
        <dbReference type="PDB" id="6X9I"/>
    </source>
</evidence>
<evidence type="ECO:0007829" key="55">
    <source>
        <dbReference type="PDB" id="6X9J"/>
    </source>
</evidence>
<evidence type="ECO:0007829" key="56">
    <source>
        <dbReference type="PDB" id="6X9K"/>
    </source>
</evidence>
<evidence type="ECO:0007829" key="57">
    <source>
        <dbReference type="PDB" id="7SFC"/>
    </source>
</evidence>
<evidence type="ECO:0007829" key="58">
    <source>
        <dbReference type="PDB" id="7SFF"/>
    </source>
</evidence>
<evidence type="ECO:0007829" key="59">
    <source>
        <dbReference type="PDB" id="8V9U"/>
    </source>
</evidence>
<accession>P26358</accession>
<accession>A0AV63</accession>
<accession>B7ZLW6</accession>
<accession>Q9UHG5</accession>
<accession>Q9ULA2</accession>
<accession>Q9UMZ6</accession>
<dbReference type="EC" id="2.1.1.37"/>
<dbReference type="EMBL" id="X63692">
    <property type="protein sequence ID" value="CAA45219.1"/>
    <property type="molecule type" value="mRNA"/>
</dbReference>
<dbReference type="EMBL" id="AF180682">
    <property type="protein sequence ID" value="AAF23609.1"/>
    <property type="molecule type" value="mRNA"/>
</dbReference>
<dbReference type="EMBL" id="AC010077">
    <property type="protein sequence ID" value="AAD54507.1"/>
    <property type="status" value="ALT_SEQ"/>
    <property type="molecule type" value="Genomic_DNA"/>
</dbReference>
<dbReference type="EMBL" id="AC011511">
    <property type="status" value="NOT_ANNOTATED_CDS"/>
    <property type="molecule type" value="Genomic_DNA"/>
</dbReference>
<dbReference type="EMBL" id="AC020931">
    <property type="status" value="NOT_ANNOTATED_CDS"/>
    <property type="molecule type" value="Genomic_DNA"/>
</dbReference>
<dbReference type="EMBL" id="BC126227">
    <property type="protein sequence ID" value="AAI26228.1"/>
    <property type="molecule type" value="mRNA"/>
</dbReference>
<dbReference type="EMBL" id="BC144093">
    <property type="protein sequence ID" value="AAI44094.1"/>
    <property type="molecule type" value="mRNA"/>
</dbReference>
<dbReference type="EMBL" id="AH008119">
    <property type="protein sequence ID" value="AAD51619.1"/>
    <property type="molecule type" value="Genomic_DNA"/>
</dbReference>
<dbReference type="CCDS" id="CCDS12228.1">
    <molecule id="P26358-1"/>
</dbReference>
<dbReference type="CCDS" id="CCDS45958.1">
    <molecule id="P26358-2"/>
</dbReference>
<dbReference type="PIR" id="S22610">
    <property type="entry name" value="S22610"/>
</dbReference>
<dbReference type="RefSeq" id="NP_001124295.1">
    <molecule id="P26358-2"/>
    <property type="nucleotide sequence ID" value="NM_001130823.3"/>
</dbReference>
<dbReference type="RefSeq" id="NP_001305659.1">
    <property type="nucleotide sequence ID" value="NM_001318730.1"/>
</dbReference>
<dbReference type="RefSeq" id="NP_001305660.1">
    <property type="nucleotide sequence ID" value="NM_001318731.1"/>
</dbReference>
<dbReference type="RefSeq" id="NP_001370.1">
    <molecule id="P26358-1"/>
    <property type="nucleotide sequence ID" value="NM_001379.4"/>
</dbReference>
<dbReference type="PDB" id="3EPZ">
    <property type="method" value="X-ray"/>
    <property type="resolution" value="2.31 A"/>
    <property type="chains" value="A/B=351-600"/>
</dbReference>
<dbReference type="PDB" id="3PTA">
    <property type="method" value="X-ray"/>
    <property type="resolution" value="3.60 A"/>
    <property type="chains" value="A=646-1600"/>
</dbReference>
<dbReference type="PDB" id="3SWR">
    <property type="method" value="X-ray"/>
    <property type="resolution" value="2.49 A"/>
    <property type="chains" value="A=601-1600"/>
</dbReference>
<dbReference type="PDB" id="4WXX">
    <property type="method" value="X-ray"/>
    <property type="resolution" value="2.62 A"/>
    <property type="chains" value="A/B=351-1600"/>
</dbReference>
<dbReference type="PDB" id="4YOC">
    <property type="method" value="X-ray"/>
    <property type="resolution" value="2.92 A"/>
    <property type="chains" value="A=600-1600"/>
</dbReference>
<dbReference type="PDB" id="4Z96">
    <property type="method" value="X-ray"/>
    <property type="resolution" value="2.85 A"/>
    <property type="chains" value="C=1098-1129"/>
</dbReference>
<dbReference type="PDB" id="4Z97">
    <property type="method" value="X-ray"/>
    <property type="resolution" value="3.00 A"/>
    <property type="chains" value="C=1098-1129"/>
</dbReference>
<dbReference type="PDB" id="5WVO">
    <property type="method" value="X-ray"/>
    <property type="resolution" value="2.00 A"/>
    <property type="chains" value="C=351-600"/>
</dbReference>
<dbReference type="PDB" id="5YDR">
    <property type="method" value="X-ray"/>
    <property type="resolution" value="2.00 A"/>
    <property type="chains" value="B=351-599"/>
</dbReference>
<dbReference type="PDB" id="6K3A">
    <property type="method" value="X-ray"/>
    <property type="resolution" value="2.30 A"/>
    <property type="chains" value="B/D/F=161-180"/>
</dbReference>
<dbReference type="PDB" id="6L1F">
    <property type="method" value="X-ray"/>
    <property type="resolution" value="1.90 A"/>
    <property type="chains" value="A=140-145"/>
</dbReference>
<dbReference type="PDB" id="6X9I">
    <property type="method" value="X-ray"/>
    <property type="resolution" value="2.20 A"/>
    <property type="chains" value="A=729-1600"/>
</dbReference>
<dbReference type="PDB" id="6X9J">
    <property type="method" value="X-ray"/>
    <property type="resolution" value="1.79 A"/>
    <property type="chains" value="A=729-1600"/>
</dbReference>
<dbReference type="PDB" id="6X9K">
    <property type="method" value="X-ray"/>
    <property type="resolution" value="2.65 A"/>
    <property type="chains" value="A=729-1600"/>
</dbReference>
<dbReference type="PDB" id="7SFC">
    <property type="method" value="X-ray"/>
    <property type="resolution" value="1.97 A"/>
    <property type="chains" value="A=729-1600"/>
</dbReference>
<dbReference type="PDB" id="7SFD">
    <property type="method" value="X-ray"/>
    <property type="resolution" value="2.09 A"/>
    <property type="chains" value="A=729-1600"/>
</dbReference>
<dbReference type="PDB" id="7SFE">
    <property type="method" value="X-ray"/>
    <property type="resolution" value="2.55 A"/>
    <property type="chains" value="A=729-1600"/>
</dbReference>
<dbReference type="PDB" id="7SFF">
    <property type="method" value="X-ray"/>
    <property type="resolution" value="2.05 A"/>
    <property type="chains" value="A=729-1600"/>
</dbReference>
<dbReference type="PDB" id="7SFG">
    <property type="method" value="X-ray"/>
    <property type="resolution" value="2.43 A"/>
    <property type="chains" value="A=729-1600"/>
</dbReference>
<dbReference type="PDB" id="7XI9">
    <property type="method" value="EM"/>
    <property type="resolution" value="2.52 A"/>
    <property type="chains" value="A=351-1616"/>
</dbReference>
<dbReference type="PDB" id="7XIB">
    <property type="method" value="EM"/>
    <property type="resolution" value="2.23 A"/>
    <property type="chains" value="A=351-1616"/>
</dbReference>
<dbReference type="PDB" id="8V9U">
    <property type="method" value="NMR"/>
    <property type="chains" value="A=16-93"/>
</dbReference>
<dbReference type="PDB" id="8XQC">
    <property type="method" value="EM"/>
    <property type="resolution" value="3.25 A"/>
    <property type="chains" value="A=351-1616"/>
</dbReference>
<dbReference type="PDBsum" id="3EPZ"/>
<dbReference type="PDBsum" id="3PTA"/>
<dbReference type="PDBsum" id="3SWR"/>
<dbReference type="PDBsum" id="4WXX"/>
<dbReference type="PDBsum" id="4YOC"/>
<dbReference type="PDBsum" id="4Z96"/>
<dbReference type="PDBsum" id="4Z97"/>
<dbReference type="PDBsum" id="5WVO"/>
<dbReference type="PDBsum" id="5YDR"/>
<dbReference type="PDBsum" id="6K3A"/>
<dbReference type="PDBsum" id="6L1F"/>
<dbReference type="PDBsum" id="6X9I"/>
<dbReference type="PDBsum" id="6X9J"/>
<dbReference type="PDBsum" id="6X9K"/>
<dbReference type="PDBsum" id="7SFC"/>
<dbReference type="PDBsum" id="7SFD"/>
<dbReference type="PDBsum" id="7SFE"/>
<dbReference type="PDBsum" id="7SFF"/>
<dbReference type="PDBsum" id="7SFG"/>
<dbReference type="PDBsum" id="7XI9"/>
<dbReference type="PDBsum" id="7XIB"/>
<dbReference type="PDBsum" id="8V9U"/>
<dbReference type="PDBsum" id="8XQC"/>
<dbReference type="EMDB" id="EMD-33200"/>
<dbReference type="EMDB" id="EMD-33201"/>
<dbReference type="EMDB" id="EMD-38573"/>
<dbReference type="SMR" id="P26358"/>
<dbReference type="BioGRID" id="108123">
    <property type="interactions" value="252"/>
</dbReference>
<dbReference type="CORUM" id="P26358"/>
<dbReference type="DIP" id="DIP-39693N"/>
<dbReference type="ELM" id="P26358"/>
<dbReference type="FunCoup" id="P26358">
    <property type="interactions" value="2622"/>
</dbReference>
<dbReference type="IntAct" id="P26358">
    <property type="interactions" value="78"/>
</dbReference>
<dbReference type="MINT" id="P26358"/>
<dbReference type="STRING" id="9606.ENSP00000352516"/>
<dbReference type="BindingDB" id="P26358"/>
<dbReference type="ChEMBL" id="CHEMBL1993"/>
<dbReference type="DrugBank" id="DB12326">
    <property type="generic name" value="Antroquinonol"/>
</dbReference>
<dbReference type="DrugBank" id="DB00928">
    <property type="generic name" value="Azacitidine"/>
</dbReference>
<dbReference type="DrugBank" id="DB01262">
    <property type="generic name" value="Decitabine"/>
</dbReference>
<dbReference type="DrugBank" id="DB12116">
    <property type="generic name" value="Epigallocatechin gallate"/>
</dbReference>
<dbReference type="DrugBank" id="DB01099">
    <property type="generic name" value="Flucytosine"/>
</dbReference>
<dbReference type="DrugBank" id="DB16168">
    <property type="generic name" value="Fluorocyclopentenylcytosine"/>
</dbReference>
<dbReference type="DrugBank" id="DB11918">
    <property type="generic name" value="Guadecitabine"/>
</dbReference>
<dbReference type="DrugBank" id="DB06544">
    <property type="generic name" value="MG98"/>
</dbReference>
<dbReference type="DrugBank" id="DB05668">
    <property type="generic name" value="Palifosfamide"/>
</dbReference>
<dbReference type="DrugBank" id="DB01035">
    <property type="generic name" value="Procainamide"/>
</dbReference>
<dbReference type="DrugBank" id="DB00721">
    <property type="generic name" value="Procaine"/>
</dbReference>
<dbReference type="DrugCentral" id="P26358"/>
<dbReference type="GuidetoPHARMACOLOGY" id="2605"/>
<dbReference type="REBASE" id="1161">
    <property type="entry name" value="M.HsaDnmt1A"/>
</dbReference>
<dbReference type="REBASE" id="4240">
    <property type="entry name" value="M.HsaDnmt1B"/>
</dbReference>
<dbReference type="GlyGen" id="P26358">
    <property type="glycosylation" value="3 sites, 1 N-linked glycan (1 site), 1 O-linked glycan (1 site)"/>
</dbReference>
<dbReference type="iPTMnet" id="P26358"/>
<dbReference type="PhosphoSitePlus" id="P26358"/>
<dbReference type="SwissPalm" id="P26358"/>
<dbReference type="BioMuta" id="DNMT1"/>
<dbReference type="DMDM" id="12231019"/>
<dbReference type="jPOST" id="P26358"/>
<dbReference type="MassIVE" id="P26358"/>
<dbReference type="PaxDb" id="9606-ENSP00000352516"/>
<dbReference type="PeptideAtlas" id="P26358"/>
<dbReference type="ProteomicsDB" id="54320">
    <molecule id="P26358-1"/>
</dbReference>
<dbReference type="ProteomicsDB" id="54321">
    <molecule id="P26358-2"/>
</dbReference>
<dbReference type="ProteomicsDB" id="54322">
    <molecule id="P26358-3"/>
</dbReference>
<dbReference type="Pumba" id="P26358"/>
<dbReference type="ABCD" id="P26358">
    <property type="antibodies" value="1 sequenced antibody"/>
</dbReference>
<dbReference type="Antibodypedia" id="1052">
    <property type="antibodies" value="1564 antibodies from 50 providers"/>
</dbReference>
<dbReference type="DNASU" id="1786"/>
<dbReference type="Ensembl" id="ENST00000340748.8">
    <molecule id="P26358-1"/>
    <property type="protein sequence ID" value="ENSP00000345739.3"/>
    <property type="gene ID" value="ENSG00000130816.17"/>
</dbReference>
<dbReference type="Ensembl" id="ENST00000359526.9">
    <molecule id="P26358-2"/>
    <property type="protein sequence ID" value="ENSP00000352516.3"/>
    <property type="gene ID" value="ENSG00000130816.17"/>
</dbReference>
<dbReference type="GeneID" id="1786"/>
<dbReference type="KEGG" id="hsa:1786"/>
<dbReference type="MANE-Select" id="ENST00000359526.9">
    <molecule id="P26358-2"/>
    <property type="protein sequence ID" value="ENSP00000352516.3"/>
    <property type="RefSeq nucleotide sequence ID" value="NM_001130823.3"/>
    <property type="RefSeq protein sequence ID" value="NP_001124295.1"/>
</dbReference>
<dbReference type="UCSC" id="uc002mng.4">
    <molecule id="P26358-1"/>
    <property type="organism name" value="human"/>
</dbReference>
<dbReference type="AGR" id="HGNC:2976"/>
<dbReference type="CTD" id="1786"/>
<dbReference type="DisGeNET" id="1786"/>
<dbReference type="GeneCards" id="DNMT1"/>
<dbReference type="GeneReviews" id="DNMT1"/>
<dbReference type="HGNC" id="HGNC:2976">
    <property type="gene designation" value="DNMT1"/>
</dbReference>
<dbReference type="HPA" id="ENSG00000130816">
    <property type="expression patterns" value="Low tissue specificity"/>
</dbReference>
<dbReference type="MalaCards" id="DNMT1"/>
<dbReference type="MIM" id="126375">
    <property type="type" value="gene"/>
</dbReference>
<dbReference type="MIM" id="604121">
    <property type="type" value="phenotype"/>
</dbReference>
<dbReference type="MIM" id="614116">
    <property type="type" value="phenotype"/>
</dbReference>
<dbReference type="neXtProt" id="NX_P26358"/>
<dbReference type="OpenTargets" id="ENSG00000130816"/>
<dbReference type="Orphanet" id="314404">
    <property type="disease" value="Autosomal dominant cerebellar ataxia-deafness-narcolepsy syndrome"/>
</dbReference>
<dbReference type="Orphanet" id="456318">
    <property type="disease" value="Hereditary sensory neuropathy-deafness-dementia syndrome"/>
</dbReference>
<dbReference type="PharmGKB" id="PA27443"/>
<dbReference type="VEuPathDB" id="HostDB:ENSG00000130816"/>
<dbReference type="eggNOG" id="ENOG502QPKK">
    <property type="taxonomic scope" value="Eukaryota"/>
</dbReference>
<dbReference type="GeneTree" id="ENSGT00390000005100"/>
<dbReference type="HOGENOM" id="CLU_003040_0_0_1"/>
<dbReference type="InParanoid" id="P26358"/>
<dbReference type="OMA" id="CKEMAPL"/>
<dbReference type="PAN-GO" id="P26358">
    <property type="GO annotations" value="1 GO annotation based on evolutionary models"/>
</dbReference>
<dbReference type="PhylomeDB" id="P26358"/>
<dbReference type="TreeFam" id="TF328926"/>
<dbReference type="BRENDA" id="2.1.1.37">
    <property type="organism ID" value="2681"/>
</dbReference>
<dbReference type="PathwayCommons" id="P26358"/>
<dbReference type="Reactome" id="R-HSA-212300">
    <property type="pathway name" value="PRC2 methylates histones and DNA"/>
</dbReference>
<dbReference type="Reactome" id="R-HSA-427413">
    <property type="pathway name" value="NoRC negatively regulates rRNA expression"/>
</dbReference>
<dbReference type="Reactome" id="R-HSA-4655427">
    <property type="pathway name" value="SUMOylation of DNA methylation proteins"/>
</dbReference>
<dbReference type="Reactome" id="R-HSA-5334118">
    <property type="pathway name" value="DNA methylation"/>
</dbReference>
<dbReference type="Reactome" id="R-HSA-9701898">
    <property type="pathway name" value="STAT3 nuclear events downstream of ALK signaling"/>
</dbReference>
<dbReference type="Reactome" id="R-HSA-9710421">
    <property type="pathway name" value="Defective pyroptosis"/>
</dbReference>
<dbReference type="Reactome" id="R-HSA-9725371">
    <property type="pathway name" value="Nuclear events stimulated by ALK signaling in cancer"/>
</dbReference>
<dbReference type="SignaLink" id="P26358"/>
<dbReference type="SIGNOR" id="P26358"/>
<dbReference type="BioGRID-ORCS" id="1786">
    <property type="hits" value="363 hits in 1188 CRISPR screens"/>
</dbReference>
<dbReference type="CD-CODE" id="91857CE7">
    <property type="entry name" value="Nucleolus"/>
</dbReference>
<dbReference type="ChiTaRS" id="DNMT1">
    <property type="organism name" value="human"/>
</dbReference>
<dbReference type="EvolutionaryTrace" id="P26358"/>
<dbReference type="GeneWiki" id="DNMT1"/>
<dbReference type="GenomeRNAi" id="1786"/>
<dbReference type="Pharos" id="P26358">
    <property type="development level" value="Tclin"/>
</dbReference>
<dbReference type="PRO" id="PR:P26358"/>
<dbReference type="Proteomes" id="UP000005640">
    <property type="component" value="Chromosome 19"/>
</dbReference>
<dbReference type="RNAct" id="P26358">
    <property type="molecule type" value="protein"/>
</dbReference>
<dbReference type="Bgee" id="ENSG00000130816">
    <property type="expression patterns" value="Expressed in oocyte and 185 other cell types or tissues"/>
</dbReference>
<dbReference type="ExpressionAtlas" id="P26358">
    <property type="expression patterns" value="baseline and differential"/>
</dbReference>
<dbReference type="GO" id="GO:0001674">
    <property type="term" value="C:female germ cell nucleus"/>
    <property type="evidence" value="ECO:0007669"/>
    <property type="project" value="Ensembl"/>
</dbReference>
<dbReference type="GO" id="GO:0005739">
    <property type="term" value="C:mitochondrion"/>
    <property type="evidence" value="ECO:0006056"/>
    <property type="project" value="FlyBase"/>
</dbReference>
<dbReference type="GO" id="GO:0005654">
    <property type="term" value="C:nucleoplasm"/>
    <property type="evidence" value="ECO:0000304"/>
    <property type="project" value="Reactome"/>
</dbReference>
<dbReference type="GO" id="GO:0005634">
    <property type="term" value="C:nucleus"/>
    <property type="evidence" value="ECO:0007005"/>
    <property type="project" value="UniProtKB"/>
</dbReference>
<dbReference type="GO" id="GO:0005721">
    <property type="term" value="C:pericentric heterochromatin"/>
    <property type="evidence" value="ECO:0007669"/>
    <property type="project" value="Ensembl"/>
</dbReference>
<dbReference type="GO" id="GO:0005657">
    <property type="term" value="C:replication fork"/>
    <property type="evidence" value="ECO:0007669"/>
    <property type="project" value="Ensembl"/>
</dbReference>
<dbReference type="GO" id="GO:0003886">
    <property type="term" value="F:DNA (cytosine-5-)-methyltransferase activity"/>
    <property type="evidence" value="ECO:0000314"/>
    <property type="project" value="UniProtKB"/>
</dbReference>
<dbReference type="GO" id="GO:0003677">
    <property type="term" value="F:DNA binding"/>
    <property type="evidence" value="ECO:0000314"/>
    <property type="project" value="UniProtKB"/>
</dbReference>
<dbReference type="GO" id="GO:0009008">
    <property type="term" value="F:DNA-methyltransferase activity"/>
    <property type="evidence" value="ECO:0000314"/>
    <property type="project" value="UniProtKB"/>
</dbReference>
<dbReference type="GO" id="GO:0106222">
    <property type="term" value="F:lncRNA binding"/>
    <property type="evidence" value="ECO:0007669"/>
    <property type="project" value="Ensembl"/>
</dbReference>
<dbReference type="GO" id="GO:0008327">
    <property type="term" value="F:methyl-CpG binding"/>
    <property type="evidence" value="ECO:0007669"/>
    <property type="project" value="Ensembl"/>
</dbReference>
<dbReference type="GO" id="GO:1990841">
    <property type="term" value="F:promoter-specific chromatin binding"/>
    <property type="evidence" value="ECO:0000314"/>
    <property type="project" value="UniProtKB"/>
</dbReference>
<dbReference type="GO" id="GO:0008270">
    <property type="term" value="F:zinc ion binding"/>
    <property type="evidence" value="ECO:0007669"/>
    <property type="project" value="UniProtKB-KW"/>
</dbReference>
<dbReference type="GO" id="GO:0071230">
    <property type="term" value="P:cellular response to amino acid stimulus"/>
    <property type="evidence" value="ECO:0007669"/>
    <property type="project" value="Ensembl"/>
</dbReference>
<dbReference type="GO" id="GO:1903926">
    <property type="term" value="P:cellular response to bisphenol A"/>
    <property type="evidence" value="ECO:0007669"/>
    <property type="project" value="Ensembl"/>
</dbReference>
<dbReference type="GO" id="GO:0141119">
    <property type="term" value="P:chromosomal DNA methylation maintenance following DNA replication"/>
    <property type="evidence" value="ECO:0000304"/>
    <property type="project" value="BHF-UCL"/>
</dbReference>
<dbReference type="GO" id="GO:0006346">
    <property type="term" value="P:DNA methylation-dependent constitutive heterochromatin formation"/>
    <property type="evidence" value="ECO:0007669"/>
    <property type="project" value="Ensembl"/>
</dbReference>
<dbReference type="GO" id="GO:0006351">
    <property type="term" value="P:DNA-templated transcription"/>
    <property type="evidence" value="ECO:0007669"/>
    <property type="project" value="Ensembl"/>
</dbReference>
<dbReference type="GO" id="GO:0043045">
    <property type="term" value="P:epigenetic programming of gene expression"/>
    <property type="evidence" value="ECO:0007669"/>
    <property type="project" value="Ensembl"/>
</dbReference>
<dbReference type="GO" id="GO:0032259">
    <property type="term" value="P:methylation"/>
    <property type="evidence" value="ECO:0007669"/>
    <property type="project" value="UniProtKB-KW"/>
</dbReference>
<dbReference type="GO" id="GO:0010629">
    <property type="term" value="P:negative regulation of gene expression"/>
    <property type="evidence" value="ECO:0000315"/>
    <property type="project" value="BHF-UCL"/>
</dbReference>
<dbReference type="GO" id="GO:0044027">
    <property type="term" value="P:negative regulation of gene expression via chromosomal CpG island methylation"/>
    <property type="evidence" value="ECO:0000314"/>
    <property type="project" value="UniProtKB"/>
</dbReference>
<dbReference type="GO" id="GO:0000122">
    <property type="term" value="P:negative regulation of transcription by RNA polymerase II"/>
    <property type="evidence" value="ECO:0000304"/>
    <property type="project" value="ProtInc"/>
</dbReference>
<dbReference type="GO" id="GO:1905460">
    <property type="term" value="P:negative regulation of vascular associated smooth muscle cell apoptotic process"/>
    <property type="evidence" value="ECO:0000315"/>
    <property type="project" value="BHF-UCL"/>
</dbReference>
<dbReference type="GO" id="GO:1905931">
    <property type="term" value="P:negative regulation of vascular associated smooth muscle cell differentiation involved in phenotypic switching"/>
    <property type="evidence" value="ECO:0000315"/>
    <property type="project" value="BHF-UCL"/>
</dbReference>
<dbReference type="GO" id="GO:0010628">
    <property type="term" value="P:positive regulation of gene expression"/>
    <property type="evidence" value="ECO:0000315"/>
    <property type="project" value="UniProtKB"/>
</dbReference>
<dbReference type="GO" id="GO:1904707">
    <property type="term" value="P:positive regulation of vascular associated smooth muscle cell proliferation"/>
    <property type="evidence" value="ECO:0000315"/>
    <property type="project" value="BHF-UCL"/>
</dbReference>
<dbReference type="CDD" id="cd04760">
    <property type="entry name" value="BAH_Dnmt1_I"/>
    <property type="match status" value="1"/>
</dbReference>
<dbReference type="CDD" id="cd04711">
    <property type="entry name" value="BAH_Dnmt1_II"/>
    <property type="match status" value="1"/>
</dbReference>
<dbReference type="FunFam" id="1.10.10.2230:FF:000001">
    <property type="entry name" value="DNA (cytosine-5)-methyltransferase"/>
    <property type="match status" value="1"/>
</dbReference>
<dbReference type="FunFam" id="2.30.30.490:FF:000004">
    <property type="entry name" value="DNA (cytosine-5)-methyltransferase"/>
    <property type="match status" value="1"/>
</dbReference>
<dbReference type="FunFam" id="2.30.30.490:FF:000006">
    <property type="entry name" value="DNA (cytosine-5)-methyltransferase"/>
    <property type="match status" value="1"/>
</dbReference>
<dbReference type="FunFam" id="3.40.50.150:FF:000036">
    <property type="entry name" value="DNA (cytosine-5)-methyltransferase"/>
    <property type="match status" value="1"/>
</dbReference>
<dbReference type="FunFam" id="3.90.120.10:FF:000001">
    <property type="entry name" value="DNA (cytosine-5)-methyltransferase"/>
    <property type="match status" value="1"/>
</dbReference>
<dbReference type="Gene3D" id="1.10.10.2230">
    <property type="match status" value="1"/>
</dbReference>
<dbReference type="Gene3D" id="2.30.30.490">
    <property type="match status" value="2"/>
</dbReference>
<dbReference type="Gene3D" id="3.90.120.10">
    <property type="entry name" value="DNA Methylase, subunit A, domain 2"/>
    <property type="match status" value="1"/>
</dbReference>
<dbReference type="Gene3D" id="3.40.50.150">
    <property type="entry name" value="Vaccinia Virus protein VP39"/>
    <property type="match status" value="1"/>
</dbReference>
<dbReference type="InterPro" id="IPR001025">
    <property type="entry name" value="BAH_dom"/>
</dbReference>
<dbReference type="InterPro" id="IPR043151">
    <property type="entry name" value="BAH_sf"/>
</dbReference>
<dbReference type="InterPro" id="IPR050390">
    <property type="entry name" value="C5-Methyltransferase"/>
</dbReference>
<dbReference type="InterPro" id="IPR018117">
    <property type="entry name" value="C5_DNA_meth_AS"/>
</dbReference>
<dbReference type="InterPro" id="IPR001525">
    <property type="entry name" value="C5_MeTfrase"/>
</dbReference>
<dbReference type="InterPro" id="IPR031303">
    <property type="entry name" value="C5_meth_CS"/>
</dbReference>
<dbReference type="InterPro" id="IPR022702">
    <property type="entry name" value="Cytosine_MeTrfase1_RFD"/>
</dbReference>
<dbReference type="InterPro" id="IPR010506">
    <property type="entry name" value="DMAP1-bd"/>
</dbReference>
<dbReference type="InterPro" id="IPR017198">
    <property type="entry name" value="DNMT1-like"/>
</dbReference>
<dbReference type="InterPro" id="IPR029063">
    <property type="entry name" value="SAM-dependent_MTases_sf"/>
</dbReference>
<dbReference type="InterPro" id="IPR002857">
    <property type="entry name" value="Znf_CXXC"/>
</dbReference>
<dbReference type="PANTHER" id="PTHR10629">
    <property type="entry name" value="CYTOSINE-SPECIFIC METHYLTRANSFERASE"/>
    <property type="match status" value="1"/>
</dbReference>
<dbReference type="PANTHER" id="PTHR10629:SF52">
    <property type="entry name" value="DNA (CYTOSINE-5)-METHYLTRANSFERASE 1"/>
    <property type="match status" value="1"/>
</dbReference>
<dbReference type="Pfam" id="PF01426">
    <property type="entry name" value="BAH"/>
    <property type="match status" value="2"/>
</dbReference>
<dbReference type="Pfam" id="PF06464">
    <property type="entry name" value="DMAP_binding"/>
    <property type="match status" value="1"/>
</dbReference>
<dbReference type="Pfam" id="PF00145">
    <property type="entry name" value="DNA_methylase"/>
    <property type="match status" value="1"/>
</dbReference>
<dbReference type="Pfam" id="PF12047">
    <property type="entry name" value="DNMT1-RFD"/>
    <property type="match status" value="1"/>
</dbReference>
<dbReference type="Pfam" id="PF02008">
    <property type="entry name" value="zf-CXXC"/>
    <property type="match status" value="1"/>
</dbReference>
<dbReference type="PIRSF" id="PIRSF037404">
    <property type="entry name" value="DNMT1"/>
    <property type="match status" value="1"/>
</dbReference>
<dbReference type="PRINTS" id="PR00105">
    <property type="entry name" value="C5METTRFRASE"/>
</dbReference>
<dbReference type="SMART" id="SM00439">
    <property type="entry name" value="BAH"/>
    <property type="match status" value="2"/>
</dbReference>
<dbReference type="SMART" id="SM01137">
    <property type="entry name" value="DMAP_binding"/>
    <property type="match status" value="1"/>
</dbReference>
<dbReference type="SUPFAM" id="SSF53335">
    <property type="entry name" value="S-adenosyl-L-methionine-dependent methyltransferases"/>
    <property type="match status" value="1"/>
</dbReference>
<dbReference type="PROSITE" id="PS51038">
    <property type="entry name" value="BAH"/>
    <property type="match status" value="2"/>
</dbReference>
<dbReference type="PROSITE" id="PS00094">
    <property type="entry name" value="C5_MTASE_1"/>
    <property type="match status" value="1"/>
</dbReference>
<dbReference type="PROSITE" id="PS00095">
    <property type="entry name" value="C5_MTASE_2"/>
    <property type="match status" value="1"/>
</dbReference>
<dbReference type="PROSITE" id="PS51912">
    <property type="entry name" value="DMAP1_BIND"/>
    <property type="match status" value="1"/>
</dbReference>
<dbReference type="PROSITE" id="PS51679">
    <property type="entry name" value="SAM_MT_C5"/>
    <property type="match status" value="1"/>
</dbReference>
<dbReference type="PROSITE" id="PS51058">
    <property type="entry name" value="ZF_CXXC"/>
    <property type="match status" value="1"/>
</dbReference>
<feature type="chain" id="PRO_0000088034" description="DNA (cytosine-5)-methyltransferase 1">
    <location>
        <begin position="1"/>
        <end position="1616"/>
    </location>
</feature>
<feature type="domain" description="DMAP1-binding" evidence="7">
    <location>
        <begin position="16"/>
        <end position="109"/>
    </location>
</feature>
<feature type="domain" description="BAH 1" evidence="4">
    <location>
        <begin position="755"/>
        <end position="880"/>
    </location>
</feature>
<feature type="domain" description="BAH 2" evidence="4">
    <location>
        <begin position="972"/>
        <end position="1100"/>
    </location>
</feature>
<feature type="repeat" description="1">
    <location>
        <begin position="1109"/>
        <end position="1110"/>
    </location>
</feature>
<feature type="repeat" description="2">
    <location>
        <begin position="1111"/>
        <end position="1112"/>
    </location>
</feature>
<feature type="repeat" description="3">
    <location>
        <begin position="1113"/>
        <end position="1114"/>
    </location>
</feature>
<feature type="repeat" description="4">
    <location>
        <begin position="1115"/>
        <end position="1116"/>
    </location>
</feature>
<feature type="repeat" description="5">
    <location>
        <begin position="1117"/>
        <end position="1118"/>
    </location>
</feature>
<feature type="repeat" description="6; approximate">
    <location>
        <begin position="1119"/>
        <end position="1120"/>
    </location>
</feature>
<feature type="domain" description="SAM-dependent MTase C5-type" evidence="6">
    <location>
        <begin position="1139"/>
        <end position="1599"/>
    </location>
</feature>
<feature type="zinc finger region" description="CXXC-type" evidence="5">
    <location>
        <begin position="646"/>
        <end position="692"/>
    </location>
</feature>
<feature type="region of interest" description="Interaction with the PRC2/EED-EZH2 complex" evidence="1">
    <location>
        <begin position="1"/>
        <end position="336"/>
    </location>
</feature>
<feature type="region of interest" description="Interaction with DNMT3A" evidence="14">
    <location>
        <begin position="1"/>
        <end position="148"/>
    </location>
</feature>
<feature type="region of interest" description="Interaction with DMAP1" evidence="11">
    <location>
        <begin position="1"/>
        <end position="120"/>
    </location>
</feature>
<feature type="region of interest" description="Disordered" evidence="9">
    <location>
        <begin position="103"/>
        <end position="349"/>
    </location>
</feature>
<feature type="region of interest" description="Interaction with DNMT3B" evidence="14">
    <location>
        <begin position="149"/>
        <end position="217"/>
    </location>
</feature>
<feature type="region of interest" description="Interaction with PCNA" evidence="32">
    <location>
        <begin position="163"/>
        <end position="174"/>
    </location>
</feature>
<feature type="region of interest" description="Interaction with the PRC2/EED-EZH2 complex" evidence="1">
    <location>
        <begin position="308"/>
        <end position="606"/>
    </location>
</feature>
<feature type="region of interest" description="Homodimerization">
    <location>
        <begin position="310"/>
        <end position="502"/>
    </location>
</feature>
<feature type="region of interest" description="DNA replication foci-targeting sequence" evidence="1">
    <location>
        <begin position="331"/>
        <end position="550"/>
    </location>
</feature>
<feature type="region of interest" description="Required for activity">
    <location>
        <begin position="651"/>
        <end position="697"/>
    </location>
</feature>
<feature type="region of interest" description="Autoinhibitory linker">
    <location>
        <begin position="693"/>
        <end position="754"/>
    </location>
</feature>
<feature type="region of interest" description="Disordered" evidence="9">
    <location>
        <begin position="699"/>
        <end position="729"/>
    </location>
</feature>
<feature type="region of interest" description="Disordered" evidence="9">
    <location>
        <begin position="1095"/>
        <end position="1130"/>
    </location>
</feature>
<feature type="region of interest" description="6 X 2 AA tandem repeats of K-G">
    <location>
        <begin position="1109"/>
        <end position="1120"/>
    </location>
</feature>
<feature type="region of interest" description="Interaction with the PRC2/EED-EZH2 complex" evidence="1">
    <location>
        <begin position="1121"/>
        <end position="1616"/>
    </location>
</feature>
<feature type="region of interest" description="Catalytic">
    <location>
        <begin position="1139"/>
        <end position="1616"/>
    </location>
</feature>
<feature type="short sequence motif" description="Nuclear localization signal" evidence="3">
    <location>
        <begin position="177"/>
        <end position="205"/>
    </location>
</feature>
<feature type="compositionally biased region" description="Basic and acidic residues" evidence="9">
    <location>
        <begin position="179"/>
        <end position="214"/>
    </location>
</feature>
<feature type="compositionally biased region" description="Basic and acidic residues" evidence="9">
    <location>
        <begin position="221"/>
        <end position="267"/>
    </location>
</feature>
<feature type="compositionally biased region" description="Basic and acidic residues" evidence="9">
    <location>
        <begin position="281"/>
        <end position="306"/>
    </location>
</feature>
<feature type="compositionally biased region" description="Basic and acidic residues" evidence="9">
    <location>
        <begin position="321"/>
        <end position="337"/>
    </location>
</feature>
<feature type="compositionally biased region" description="Acidic residues" evidence="9">
    <location>
        <begin position="699"/>
        <end position="709"/>
    </location>
</feature>
<feature type="compositionally biased region" description="Basic residues" evidence="9">
    <location>
        <begin position="716"/>
        <end position="728"/>
    </location>
</feature>
<feature type="compositionally biased region" description="Basic residues" evidence="9">
    <location>
        <begin position="1110"/>
        <end position="1120"/>
    </location>
</feature>
<feature type="active site">
    <location>
        <position position="1226"/>
    </location>
</feature>
<feature type="binding site">
    <location>
        <position position="353"/>
    </location>
    <ligand>
        <name>Zn(2+)</name>
        <dbReference type="ChEBI" id="CHEBI:29105"/>
    </ligand>
</feature>
<feature type="binding site">
    <location>
        <position position="356"/>
    </location>
    <ligand>
        <name>Zn(2+)</name>
        <dbReference type="ChEBI" id="CHEBI:29105"/>
    </ligand>
</feature>
<feature type="binding site">
    <location>
        <position position="414"/>
    </location>
    <ligand>
        <name>Zn(2+)</name>
        <dbReference type="ChEBI" id="CHEBI:29105"/>
    </ligand>
</feature>
<feature type="binding site">
    <location>
        <position position="418"/>
    </location>
    <ligand>
        <name>Zn(2+)</name>
        <dbReference type="ChEBI" id="CHEBI:29105"/>
    </ligand>
</feature>
<feature type="binding site" evidence="5">
    <location>
        <position position="653"/>
    </location>
    <ligand>
        <name>Zn(2+)</name>
        <dbReference type="ChEBI" id="CHEBI:29105"/>
        <label>1</label>
    </ligand>
</feature>
<feature type="binding site" evidence="5">
    <location>
        <position position="656"/>
    </location>
    <ligand>
        <name>Zn(2+)</name>
        <dbReference type="ChEBI" id="CHEBI:29105"/>
        <label>1</label>
    </ligand>
</feature>
<feature type="binding site" evidence="5">
    <location>
        <position position="659"/>
    </location>
    <ligand>
        <name>Zn(2+)</name>
        <dbReference type="ChEBI" id="CHEBI:29105"/>
        <label>1</label>
    </ligand>
</feature>
<feature type="binding site" evidence="5">
    <location>
        <position position="664"/>
    </location>
    <ligand>
        <name>Zn(2+)</name>
        <dbReference type="ChEBI" id="CHEBI:29105"/>
        <label>2</label>
    </ligand>
</feature>
<feature type="binding site" evidence="5">
    <location>
        <position position="667"/>
    </location>
    <ligand>
        <name>Zn(2+)</name>
        <dbReference type="ChEBI" id="CHEBI:29105"/>
        <label>2</label>
    </ligand>
</feature>
<feature type="binding site" evidence="5">
    <location>
        <position position="670"/>
    </location>
    <ligand>
        <name>Zn(2+)</name>
        <dbReference type="ChEBI" id="CHEBI:29105"/>
        <label>2</label>
    </ligand>
</feature>
<feature type="binding site" evidence="5">
    <location>
        <position position="686"/>
    </location>
    <ligand>
        <name>Zn(2+)</name>
        <dbReference type="ChEBI" id="CHEBI:29105"/>
        <label>2</label>
    </ligand>
</feature>
<feature type="binding site" evidence="5">
    <location>
        <position position="691"/>
    </location>
    <ligand>
        <name>Zn(2+)</name>
        <dbReference type="ChEBI" id="CHEBI:29105"/>
        <label>1</label>
    </ligand>
</feature>
<feature type="binding site" evidence="2">
    <location>
        <position position="1146"/>
    </location>
    <ligand>
        <name>S-adenosyl-L-methionine</name>
        <dbReference type="ChEBI" id="CHEBI:59789"/>
    </ligand>
</feature>
<feature type="binding site" evidence="2">
    <location>
        <begin position="1150"/>
        <end position="1151"/>
    </location>
    <ligand>
        <name>S-adenosyl-L-methionine</name>
        <dbReference type="ChEBI" id="CHEBI:59789"/>
    </ligand>
</feature>
<feature type="binding site" evidence="22 36">
    <location>
        <begin position="1168"/>
        <end position="1169"/>
    </location>
    <ligand>
        <name>S-adenosyl-L-methionine</name>
        <dbReference type="ChEBI" id="CHEBI:59789"/>
    </ligand>
</feature>
<feature type="binding site" evidence="2">
    <location>
        <begin position="1190"/>
        <end position="1191"/>
    </location>
    <ligand>
        <name>S-adenosyl-L-methionine</name>
        <dbReference type="ChEBI" id="CHEBI:59789"/>
    </ligand>
</feature>
<feature type="binding site" evidence="22 36">
    <location>
        <position position="1191"/>
    </location>
    <ligand>
        <name>S-adenosyl-L-methionine</name>
        <dbReference type="ChEBI" id="CHEBI:59789"/>
    </ligand>
</feature>
<feature type="binding site" evidence="22 36">
    <location>
        <position position="1578"/>
    </location>
    <ligand>
        <name>S-adenosyl-L-methionine</name>
        <dbReference type="ChEBI" id="CHEBI:59789"/>
    </ligand>
</feature>
<feature type="binding site" evidence="2">
    <location>
        <position position="1580"/>
    </location>
    <ligand>
        <name>S-adenosyl-L-methionine</name>
        <dbReference type="ChEBI" id="CHEBI:59789"/>
    </ligand>
</feature>
<feature type="site" description="Important for activity" evidence="1">
    <location>
        <position position="509"/>
    </location>
</feature>
<feature type="modified residue" description="N6,N6-dimethyllysine" evidence="17">
    <location>
        <position position="70"/>
    </location>
</feature>
<feature type="modified residue" description="Phosphoserine" evidence="37 39 41 43 44">
    <location>
        <position position="127"/>
    </location>
</feature>
<feature type="modified residue" description="Phosphoserine" evidence="43">
    <location>
        <position position="133"/>
    </location>
</feature>
<feature type="modified residue" description="Phosphothreonine" evidence="44">
    <location>
        <position position="137"/>
    </location>
</feature>
<feature type="modified residue" description="Phosphoserine" evidence="2">
    <location>
        <position position="141"/>
    </location>
</feature>
<feature type="modified residue" description="N6-methyllysine; by SETD7" evidence="21">
    <location>
        <position position="142"/>
    </location>
</feature>
<feature type="modified residue" description="Phosphoserine; by PKB/AKT1" evidence="21 39 44">
    <location>
        <position position="143"/>
    </location>
</feature>
<feature type="modified residue" description="Phosphoserine" evidence="39">
    <location>
        <position position="152"/>
    </location>
</feature>
<feature type="modified residue" description="Phosphoserine" evidence="24 39 44">
    <location>
        <position position="154"/>
    </location>
</feature>
<feature type="modified residue" description="N6-acetyllysine" evidence="26">
    <location>
        <position position="160"/>
    </location>
</feature>
<feature type="modified residue" description="Phosphothreonine" evidence="44">
    <location>
        <position position="166"/>
    </location>
</feature>
<feature type="modified residue" description="N6-acetyllysine" evidence="40">
    <location>
        <position position="173"/>
    </location>
</feature>
<feature type="modified residue" description="N6-acetyllysine" evidence="26">
    <location>
        <position position="188"/>
    </location>
</feature>
<feature type="modified residue" description="N6-acetyllysine; alternate" evidence="26">
    <location>
        <position position="259"/>
    </location>
</feature>
<feature type="modified residue" description="Phosphoserine" evidence="44">
    <location>
        <position position="312"/>
    </location>
</feature>
<feature type="modified residue" description="N6-acetyllysine" evidence="26">
    <location>
        <position position="366"/>
    </location>
</feature>
<feature type="modified residue" description="Phosphoserine" evidence="39 42 44">
    <location>
        <position position="394"/>
    </location>
</feature>
<feature type="modified residue" description="Phosphoserine" evidence="44">
    <location>
        <position position="398"/>
    </location>
</feature>
<feature type="modified residue" description="Phosphoserine" evidence="2">
    <location>
        <position position="509"/>
    </location>
</feature>
<feature type="modified residue" description="Phosphoserine" evidence="44">
    <location>
        <position position="549"/>
    </location>
</feature>
<feature type="modified residue" description="Phosphoserine" evidence="37 42 43 44">
    <location>
        <position position="714"/>
    </location>
</feature>
<feature type="modified residue" description="Phosphoserine" evidence="38">
    <location>
        <position position="732"/>
    </location>
</feature>
<feature type="modified residue" description="N6-acetyllysine" evidence="26">
    <location>
        <position position="749"/>
    </location>
</feature>
<feature type="modified residue" description="Phosphoserine" evidence="44">
    <location>
        <position position="878"/>
    </location>
</feature>
<feature type="modified residue" description="N6-acetyllysine" evidence="26">
    <location>
        <position position="891"/>
    </location>
</feature>
<feature type="modified residue" description="N6-acetyllysine" evidence="26">
    <location>
        <position position="957"/>
    </location>
</feature>
<feature type="modified residue" description="N6-acetyllysine" evidence="26">
    <location>
        <position position="961"/>
    </location>
</feature>
<feature type="modified residue" description="N6-acetyllysine" evidence="26">
    <location>
        <position position="975"/>
    </location>
</feature>
<feature type="modified residue" description="N6-acetyllysine" evidence="26">
    <location>
        <position position="1054"/>
    </location>
</feature>
<feature type="modified residue" description="N6-acetyllysine" evidence="26 40">
    <location>
        <position position="1111"/>
    </location>
</feature>
<feature type="modified residue" description="N6-acetyllysine" evidence="26 40">
    <location>
        <position position="1113"/>
    </location>
</feature>
<feature type="modified residue" description="N6-acetyllysine" evidence="26 40">
    <location>
        <position position="1115"/>
    </location>
</feature>
<feature type="modified residue" description="N6-acetyllysine; by EHMT2" evidence="26">
    <location>
        <position position="1117"/>
    </location>
</feature>
<feature type="modified residue" description="N6-acetyllysine" evidence="2">
    <location>
        <position position="1119"/>
    </location>
</feature>
<feature type="modified residue" description="N6-acetyllysine" evidence="2">
    <location>
        <position position="1121"/>
    </location>
</feature>
<feature type="modified residue" description="N6-acetyllysine" evidence="26">
    <location>
        <position position="1349"/>
    </location>
</feature>
<feature type="modified residue" description="N6-acetyllysine" evidence="26">
    <location>
        <position position="1415"/>
    </location>
</feature>
<feature type="cross-link" description="Glycyl lysine isopeptide (Lys-Gly) (interchain with G-Cter in SUMO2); alternate" evidence="46">
    <location>
        <position position="259"/>
    </location>
</feature>
<feature type="cross-link" description="Glycyl lysine isopeptide (Lys-Gly) (interchain with G-Cter in SUMO2)" evidence="45 46">
    <location>
        <position position="1609"/>
    </location>
</feature>
<feature type="splice variant" id="VSP_005617" description="In isoform 3." evidence="34">
    <location>
        <begin position="1"/>
        <end position="336"/>
    </location>
</feature>
<feature type="splice variant" id="VSP_005618" description="In isoform 2." evidence="33">
    <original>P</original>
    <variation>RSRDPPASASQVTGIRA</variation>
    <location>
        <position position="149"/>
    </location>
</feature>
<feature type="sequence variant" id="VAR_024605" description="In dbSNP:rs16999593.">
    <original>H</original>
    <variation>R</variation>
    <location>
        <position position="97"/>
    </location>
</feature>
<feature type="sequence variant" id="VAR_051960" description="In dbSNP:rs2228612.">
    <original>I</original>
    <variation>V</variation>
    <location>
        <position position="311"/>
    </location>
</feature>
<feature type="sequence variant" id="VAR_065965" description="In HSN1E; unstable protein with decreased enzymatic activity and impaired heterochromatin binding ability after the S phase; dbSNP:rs199473691." evidence="23">
    <original>DP</original>
    <variation>EY</variation>
    <location>
        <begin position="490"/>
        <end position="491"/>
    </location>
</feature>
<feature type="sequence variant" id="VAR_065966" description="In HSN1E; unstable protein with decreased enzymatic activity and impaired heterochromatin binding ability after the S phase; dbSNP:rs199473690." evidence="23">
    <original>Y</original>
    <variation>C</variation>
    <location>
        <position position="495"/>
    </location>
</feature>
<feature type="sequence variant" id="VAR_070055" description="In ADCADN; dbSNP:rs397509392." evidence="27">
    <original>A</original>
    <variation>V</variation>
    <location>
        <position position="554"/>
    </location>
</feature>
<feature type="sequence variant" id="VAR_070056" description="In ADCADN; dbSNP:rs397509393." evidence="27">
    <original>G</original>
    <variation>A</variation>
    <location>
        <position position="589"/>
    </location>
</feature>
<feature type="sequence variant" id="VAR_070057" description="In ADCADN; dbSNP:rs397509391." evidence="27">
    <original>V</original>
    <variation>F</variation>
    <location>
        <position position="590"/>
    </location>
</feature>
<feature type="mutagenesis site" description="Loss of interaction with L3MBTL3 and DCAF5. Loss of ubiquitination by the CRL4-DCAF5 E3 ubiquitin ligase complex." evidence="30">
    <original>K</original>
    <variation>A</variation>
    <location>
        <position position="142"/>
    </location>
</feature>
<feature type="mutagenesis site" description="Abolishes interaction with PCNA." evidence="32">
    <original>R</original>
    <variation>A</variation>
    <location>
        <position position="163"/>
    </location>
</feature>
<feature type="mutagenesis site" description="Abolishes interaction with PCNA." evidence="32">
    <original>Q</original>
    <variation>A</variation>
    <location>
        <position position="164"/>
    </location>
</feature>
<feature type="mutagenesis site" description="Abolishes interaction with PCNA." evidence="32">
    <original>T</original>
    <variation>A</variation>
    <location>
        <position position="166"/>
    </location>
</feature>
<feature type="mutagenesis site" description="Abolishes interaction with PCNA." evidence="32">
    <original>I</original>
    <variation>A</variation>
    <location>
        <position position="167"/>
    </location>
</feature>
<feature type="mutagenesis site" description="No loss of interaction with PCNA." evidence="32">
    <original>S</original>
    <variation>A</variation>
    <location>
        <position position="169"/>
    </location>
</feature>
<feature type="mutagenesis site" description="Abolishes interaction with PCNA." evidence="32">
    <original>H</original>
    <variation>V</variation>
    <location>
        <position position="170"/>
    </location>
</feature>
<feature type="mutagenesis site" description="Abolishes interaction with PCNA." evidence="32">
    <original>F</original>
    <variation>V</variation>
    <location>
        <position position="171"/>
    </location>
</feature>
<feature type="mutagenesis site" description="No loss of interaction with PCNA." evidence="32">
    <original>A</original>
    <variation>S</variation>
    <location>
        <position position="172"/>
    </location>
</feature>
<feature type="mutagenesis site" description="No loss of interaction with PCNA." evidence="32">
    <original>K</original>
    <variation>A</variation>
    <location>
        <position position="173"/>
    </location>
</feature>
<feature type="mutagenesis site" description="Reduces activity about 10-fold; when associated with G-656; G-659; G-664; G-667 and G-670." evidence="18">
    <original>C</original>
    <variation>G</variation>
    <location>
        <position position="653"/>
    </location>
</feature>
<feature type="mutagenesis site" description="Reduces activity about 10-fold; when associated with G-653; G-659; G-664; G-667 and G-670." evidence="18">
    <original>C</original>
    <variation>G</variation>
    <location>
        <position position="656"/>
    </location>
</feature>
<feature type="mutagenesis site" description="Reduces activity about 10-fold; when associated with G-653; G-656; G-664; G-667 and G-670." evidence="18">
    <original>C</original>
    <variation>G</variation>
    <location>
        <position position="659"/>
    </location>
</feature>
<feature type="mutagenesis site" description="Reduces activity about 10-fold; when associated with G-653; G-656; G-659; G-667 and G-670." evidence="18">
    <original>C</original>
    <variation>F</variation>
    <location>
        <position position="664"/>
    </location>
</feature>
<feature type="mutagenesis site" description="Reduces activity about 10-fold; when associated with G-653; G-656; G-659; G-664 and G-670." evidence="18">
    <original>C</original>
    <variation>G</variation>
    <location>
        <position position="667"/>
    </location>
</feature>
<feature type="mutagenesis site" description="Reduces activity about 10-fold; when associated with G-653; G-656; G-659; G-664 and G-667." evidence="18">
    <original>C</original>
    <variation>G</variation>
    <location>
        <position position="670"/>
    </location>
</feature>
<feature type="mutagenesis site" description="Loss of activity." evidence="20">
    <original>C</original>
    <variation>A</variation>
    <location>
        <position position="1226"/>
    </location>
</feature>
<feature type="helix" evidence="59">
    <location>
        <begin position="22"/>
        <end position="34"/>
    </location>
</feature>
<feature type="helix" evidence="59">
    <location>
        <begin position="38"/>
        <end position="50"/>
    </location>
</feature>
<feature type="helix" evidence="59">
    <location>
        <begin position="55"/>
        <end position="69"/>
    </location>
</feature>
<feature type="helix" evidence="59">
    <location>
        <begin position="75"/>
        <end position="92"/>
    </location>
</feature>
<feature type="helix" evidence="53">
    <location>
        <begin position="167"/>
        <end position="169"/>
    </location>
</feature>
<feature type="turn" evidence="52">
    <location>
        <begin position="354"/>
        <end position="356"/>
    </location>
</feature>
<feature type="strand" evidence="52">
    <location>
        <begin position="359"/>
        <end position="361"/>
    </location>
</feature>
<feature type="helix" evidence="52">
    <location>
        <begin position="363"/>
        <end position="365"/>
    </location>
</feature>
<feature type="helix" evidence="51">
    <location>
        <begin position="377"/>
        <end position="381"/>
    </location>
</feature>
<feature type="helix" evidence="51">
    <location>
        <begin position="384"/>
        <end position="386"/>
    </location>
</feature>
<feature type="strand" evidence="51">
    <location>
        <begin position="392"/>
        <end position="394"/>
    </location>
</feature>
<feature type="strand" evidence="51">
    <location>
        <begin position="404"/>
        <end position="414"/>
    </location>
</feature>
<feature type="strand" evidence="51">
    <location>
        <begin position="417"/>
        <end position="419"/>
    </location>
</feature>
<feature type="strand" evidence="51">
    <location>
        <begin position="422"/>
        <end position="425"/>
    </location>
</feature>
<feature type="turn" evidence="51">
    <location>
        <begin position="426"/>
        <end position="430"/>
    </location>
</feature>
<feature type="strand" evidence="51">
    <location>
        <begin position="433"/>
        <end position="440"/>
    </location>
</feature>
<feature type="strand" evidence="51">
    <location>
        <begin position="453"/>
        <end position="458"/>
    </location>
</feature>
<feature type="strand" evidence="51">
    <location>
        <begin position="463"/>
        <end position="467"/>
    </location>
</feature>
<feature type="strand" evidence="51">
    <location>
        <begin position="470"/>
        <end position="473"/>
    </location>
</feature>
<feature type="strand" evidence="51">
    <location>
        <begin position="476"/>
        <end position="480"/>
    </location>
</feature>
<feature type="strand" evidence="51">
    <location>
        <begin position="485"/>
        <end position="488"/>
    </location>
</feature>
<feature type="turn" evidence="51">
    <location>
        <begin position="493"/>
        <end position="495"/>
    </location>
</feature>
<feature type="helix" evidence="51">
    <location>
        <begin position="496"/>
        <end position="518"/>
    </location>
</feature>
<feature type="helix" evidence="51">
    <location>
        <begin position="524"/>
        <end position="533"/>
    </location>
</feature>
<feature type="helix" evidence="47">
    <location>
        <begin position="538"/>
        <end position="540"/>
    </location>
</feature>
<feature type="helix" evidence="51">
    <location>
        <begin position="547"/>
        <end position="551"/>
    </location>
</feature>
<feature type="helix" evidence="51">
    <location>
        <begin position="554"/>
        <end position="566"/>
    </location>
</feature>
<feature type="strand" evidence="51">
    <location>
        <begin position="575"/>
        <end position="578"/>
    </location>
</feature>
<feature type="helix" evidence="51">
    <location>
        <begin position="579"/>
        <end position="588"/>
    </location>
</feature>
<feature type="helix" evidence="52">
    <location>
        <begin position="592"/>
        <end position="597"/>
    </location>
</feature>
<feature type="helix" evidence="48">
    <location>
        <begin position="622"/>
        <end position="629"/>
    </location>
</feature>
<feature type="turn" evidence="48">
    <location>
        <begin position="657"/>
        <end position="659"/>
    </location>
</feature>
<feature type="helix" evidence="48">
    <location>
        <begin position="670"/>
        <end position="672"/>
    </location>
</feature>
<feature type="turn" evidence="49">
    <location>
        <begin position="674"/>
        <end position="677"/>
    </location>
</feature>
<feature type="helix" evidence="48">
    <location>
        <begin position="687"/>
        <end position="689"/>
    </location>
</feature>
<feature type="helix" evidence="49">
    <location>
        <begin position="692"/>
        <end position="703"/>
    </location>
</feature>
<feature type="strand" evidence="57">
    <location>
        <begin position="731"/>
        <end position="733"/>
    </location>
</feature>
<feature type="strand" evidence="55">
    <location>
        <begin position="738"/>
        <end position="741"/>
    </location>
</feature>
<feature type="strand" evidence="55">
    <location>
        <begin position="744"/>
        <end position="746"/>
    </location>
</feature>
<feature type="strand" evidence="55">
    <location>
        <begin position="748"/>
        <end position="752"/>
    </location>
</feature>
<feature type="strand" evidence="55">
    <location>
        <begin position="755"/>
        <end position="758"/>
    </location>
</feature>
<feature type="strand" evidence="55">
    <location>
        <begin position="762"/>
        <end position="765"/>
    </location>
</feature>
<feature type="strand" evidence="48">
    <location>
        <begin position="767"/>
        <end position="769"/>
    </location>
</feature>
<feature type="strand" evidence="55">
    <location>
        <begin position="775"/>
        <end position="785"/>
    </location>
</feature>
<feature type="turn" evidence="55">
    <location>
        <begin position="786"/>
        <end position="788"/>
    </location>
</feature>
<feature type="strand" evidence="55">
    <location>
        <begin position="789"/>
        <end position="799"/>
    </location>
</feature>
<feature type="helix" evidence="55">
    <location>
        <begin position="800"/>
        <end position="802"/>
    </location>
</feature>
<feature type="strand" evidence="50">
    <location>
        <begin position="803"/>
        <end position="805"/>
    </location>
</feature>
<feature type="helix" evidence="55">
    <location>
        <begin position="806"/>
        <end position="808"/>
    </location>
</feature>
<feature type="strand" evidence="55">
    <location>
        <begin position="813"/>
        <end position="824"/>
    </location>
</feature>
<feature type="helix" evidence="55">
    <location>
        <begin position="825"/>
        <end position="827"/>
    </location>
</feature>
<feature type="strand" evidence="55">
    <location>
        <begin position="828"/>
        <end position="832"/>
    </location>
</feature>
<feature type="strand" evidence="55">
    <location>
        <begin position="834"/>
        <end position="836"/>
    </location>
</feature>
<feature type="helix" evidence="55">
    <location>
        <begin position="843"/>
        <end position="845"/>
    </location>
</feature>
<feature type="helix" evidence="55">
    <location>
        <begin position="851"/>
        <end position="856"/>
    </location>
</feature>
<feature type="strand" evidence="55">
    <location>
        <begin position="860"/>
        <end position="870"/>
    </location>
</feature>
<feature type="turn" evidence="55">
    <location>
        <begin position="871"/>
        <end position="874"/>
    </location>
</feature>
<feature type="strand" evidence="55">
    <location>
        <begin position="875"/>
        <end position="877"/>
    </location>
</feature>
<feature type="turn" evidence="55">
    <location>
        <begin position="886"/>
        <end position="891"/>
    </location>
</feature>
<feature type="helix" evidence="55">
    <location>
        <begin position="894"/>
        <end position="906"/>
    </location>
</feature>
<feature type="strand" evidence="55">
    <location>
        <begin position="909"/>
        <end position="916"/>
    </location>
</feature>
<feature type="strand" evidence="55">
    <location>
        <begin position="918"/>
        <end position="928"/>
    </location>
</feature>
<feature type="strand" evidence="55">
    <location>
        <begin position="931"/>
        <end position="934"/>
    </location>
</feature>
<feature type="strand" evidence="55">
    <location>
        <begin position="938"/>
        <end position="941"/>
    </location>
</feature>
<feature type="helix" evidence="55">
    <location>
        <begin position="943"/>
        <end position="945"/>
    </location>
</feature>
<feature type="turn" evidence="55">
    <location>
        <begin position="966"/>
        <end position="968"/>
    </location>
</feature>
<feature type="helix" evidence="55">
    <location>
        <begin position="972"/>
        <end position="975"/>
    </location>
</feature>
<feature type="helix" evidence="48">
    <location>
        <begin position="976"/>
        <end position="980"/>
    </location>
</feature>
<feature type="strand" evidence="55">
    <location>
        <begin position="992"/>
        <end position="1003"/>
    </location>
</feature>
<feature type="strand" evidence="54">
    <location>
        <begin position="1005"/>
        <end position="1009"/>
    </location>
</feature>
<feature type="strand" evidence="55">
    <location>
        <begin position="1015"/>
        <end position="1022"/>
    </location>
</feature>
<feature type="helix" evidence="55">
    <location>
        <begin position="1024"/>
        <end position="1026"/>
    </location>
</feature>
<feature type="strand" evidence="55">
    <location>
        <begin position="1027"/>
        <end position="1029"/>
    </location>
</feature>
<feature type="helix" evidence="55">
    <location>
        <begin position="1031"/>
        <end position="1034"/>
    </location>
</feature>
<feature type="strand" evidence="48">
    <location>
        <begin position="1035"/>
        <end position="1037"/>
    </location>
</feature>
<feature type="strand" evidence="55">
    <location>
        <begin position="1041"/>
        <end position="1052"/>
    </location>
</feature>
<feature type="helix" evidence="55">
    <location>
        <begin position="1053"/>
        <end position="1055"/>
    </location>
</feature>
<feature type="strand" evidence="55">
    <location>
        <begin position="1058"/>
        <end position="1064"/>
    </location>
</feature>
<feature type="helix" evidence="55">
    <location>
        <begin position="1065"/>
        <end position="1067"/>
    </location>
</feature>
<feature type="helix" evidence="55">
    <location>
        <begin position="1072"/>
        <end position="1077"/>
    </location>
</feature>
<feature type="strand" evidence="55">
    <location>
        <begin position="1078"/>
        <end position="1090"/>
    </location>
</feature>
<feature type="turn" evidence="55">
    <location>
        <begin position="1091"/>
        <end position="1094"/>
    </location>
</feature>
<feature type="strand" evidence="57">
    <location>
        <begin position="1095"/>
        <end position="1097"/>
    </location>
</feature>
<feature type="helix" evidence="57">
    <location>
        <begin position="1101"/>
        <end position="1103"/>
    </location>
</feature>
<feature type="strand" evidence="55">
    <location>
        <begin position="1139"/>
        <end position="1145"/>
    </location>
</feature>
<feature type="helix" evidence="55">
    <location>
        <begin position="1150"/>
        <end position="1158"/>
    </location>
</feature>
<feature type="strand" evidence="55">
    <location>
        <begin position="1160"/>
        <end position="1167"/>
    </location>
</feature>
<feature type="helix" evidence="55">
    <location>
        <begin position="1171"/>
        <end position="1180"/>
    </location>
</feature>
<feature type="strand" evidence="55">
    <location>
        <begin position="1185"/>
        <end position="1187"/>
    </location>
</feature>
<feature type="helix" evidence="55">
    <location>
        <begin position="1191"/>
        <end position="1199"/>
    </location>
</feature>
<feature type="turn" evidence="55">
    <location>
        <begin position="1214"/>
        <end position="1216"/>
    </location>
</feature>
<feature type="strand" evidence="55">
    <location>
        <begin position="1219"/>
        <end position="1222"/>
    </location>
</feature>
<feature type="turn" evidence="54">
    <location>
        <begin position="1227"/>
        <end position="1229"/>
    </location>
</feature>
<feature type="strand" evidence="55">
    <location>
        <begin position="1231"/>
        <end position="1233"/>
    </location>
</feature>
<feature type="helix" evidence="55">
    <location>
        <begin position="1237"/>
        <end position="1244"/>
    </location>
</feature>
<feature type="helix" evidence="55">
    <location>
        <begin position="1247"/>
        <end position="1258"/>
    </location>
</feature>
<feature type="strand" evidence="55">
    <location>
        <begin position="1261"/>
        <end position="1268"/>
    </location>
</feature>
<feature type="helix" evidence="55">
    <location>
        <begin position="1269"/>
        <end position="1272"/>
    </location>
</feature>
<feature type="helix" evidence="55">
    <location>
        <begin position="1274"/>
        <end position="1290"/>
    </location>
</feature>
<feature type="strand" evidence="55">
    <location>
        <begin position="1293"/>
        <end position="1300"/>
    </location>
</feature>
<feature type="helix" evidence="55">
    <location>
        <begin position="1301"/>
        <end position="1304"/>
    </location>
</feature>
<feature type="strand" evidence="55">
    <location>
        <begin position="1311"/>
        <end position="1318"/>
    </location>
</feature>
<feature type="helix" evidence="55">
    <location>
        <begin position="1336"/>
        <end position="1338"/>
    </location>
</feature>
<feature type="strand" evidence="55">
    <location>
        <begin position="1343"/>
        <end position="1345"/>
    </location>
</feature>
<feature type="strand" evidence="55">
    <location>
        <begin position="1348"/>
        <end position="1350"/>
    </location>
</feature>
<feature type="helix" evidence="55">
    <location>
        <begin position="1367"/>
        <end position="1371"/>
    </location>
</feature>
<feature type="strand" evidence="55">
    <location>
        <begin position="1384"/>
        <end position="1386"/>
    </location>
</feature>
<feature type="helix" evidence="55">
    <location>
        <begin position="1395"/>
        <end position="1401"/>
    </location>
</feature>
<feature type="helix" evidence="55">
    <location>
        <begin position="1419"/>
        <end position="1426"/>
    </location>
</feature>
<feature type="helix" evidence="55">
    <location>
        <begin position="1436"/>
        <end position="1438"/>
    </location>
</feature>
<feature type="strand" evidence="54">
    <location>
        <begin position="1447"/>
        <end position="1449"/>
    </location>
</feature>
<feature type="strand" evidence="55">
    <location>
        <begin position="1451"/>
        <end position="1453"/>
    </location>
</feature>
<feature type="strand" evidence="54">
    <location>
        <begin position="1459"/>
        <end position="1461"/>
    </location>
</feature>
<feature type="turn" evidence="55">
    <location>
        <begin position="1462"/>
        <end position="1464"/>
    </location>
</feature>
<feature type="strand" evidence="56">
    <location>
        <begin position="1474"/>
        <end position="1476"/>
    </location>
</feature>
<feature type="helix" evidence="55">
    <location>
        <begin position="1477"/>
        <end position="1480"/>
    </location>
</feature>
<feature type="strand" evidence="55">
    <location>
        <begin position="1481"/>
        <end position="1483"/>
    </location>
</feature>
<feature type="helix" evidence="55">
    <location>
        <begin position="1487"/>
        <end position="1489"/>
    </location>
</feature>
<feature type="strand" evidence="55">
    <location>
        <begin position="1493"/>
        <end position="1496"/>
    </location>
</feature>
<feature type="helix" evidence="55">
    <location>
        <begin position="1499"/>
        <end position="1503"/>
    </location>
</feature>
<feature type="helix" evidence="55">
    <location>
        <begin position="1504"/>
        <end position="1506"/>
    </location>
</feature>
<feature type="helix" evidence="55">
    <location>
        <begin position="1508"/>
        <end position="1510"/>
    </location>
</feature>
<feature type="turn" evidence="55">
    <location>
        <begin position="1511"/>
        <end position="1514"/>
    </location>
</feature>
<feature type="strand" evidence="57">
    <location>
        <begin position="1523"/>
        <end position="1525"/>
    </location>
</feature>
<feature type="strand" evidence="58">
    <location>
        <begin position="1534"/>
        <end position="1536"/>
    </location>
</feature>
<feature type="strand" evidence="55">
    <location>
        <begin position="1542"/>
        <end position="1547"/>
    </location>
</feature>
<feature type="helix" evidence="55">
    <location>
        <begin position="1550"/>
        <end position="1556"/>
    </location>
</feature>
<feature type="helix" evidence="55">
    <location>
        <begin position="1569"/>
        <end position="1577"/>
    </location>
</feature>
<feature type="helix" evidence="55">
    <location>
        <begin position="1582"/>
        <end position="1598"/>
    </location>
</feature>
<comment type="function">
    <text evidence="15 16 18 29">Methylates CpG residues. Preferentially methylates hemimethylated DNA. Associates with DNA replication sites in S phase maintaining the methylation pattern in the newly synthesized strand, that is essential for epigenetic inheritance. Associates with chromatin during G2 and M phases to maintain DNA methylation independently of replication. It is responsible for maintaining methylation patterns established in development. DNA methylation is coordinated with methylation of histones. Mediates transcriptional repression by direct binding to HDAC2. In association with DNMT3B and via the recruitment of CTCFL/BORIS, involved in activation of BAG1 gene expression by modulating dimethylation of promoter histone H3 at H3K4 and H3K9. Probably forms a corepressor complex required for activated KRAS-mediated promoter hypermethylation and transcriptional silencing of tumor suppressor genes (TSGs) or other tumor-related genes in colorectal cancer (CRC) cells (PubMed:24623306). Also required to maintain a transcriptionally repressive state of genes in undifferentiated embryonic stem cells (ESCs) (PubMed:24623306). Associates at promoter regions of tumor suppressor genes (TSGs) leading to their gene silencing (PubMed:24623306). Promotes tumor growth (PubMed:24623306).</text>
</comment>
<comment type="catalytic activity">
    <reaction evidence="8">
        <text>a 2'-deoxycytidine in DNA + S-adenosyl-L-methionine = a 5-methyl-2'-deoxycytidine in DNA + S-adenosyl-L-homocysteine + H(+)</text>
        <dbReference type="Rhea" id="RHEA:13681"/>
        <dbReference type="Rhea" id="RHEA-COMP:11369"/>
        <dbReference type="Rhea" id="RHEA-COMP:11370"/>
        <dbReference type="ChEBI" id="CHEBI:15378"/>
        <dbReference type="ChEBI" id="CHEBI:57856"/>
        <dbReference type="ChEBI" id="CHEBI:59789"/>
        <dbReference type="ChEBI" id="CHEBI:85452"/>
        <dbReference type="ChEBI" id="CHEBI:85454"/>
        <dbReference type="EC" id="2.1.1.37"/>
    </reaction>
</comment>
<comment type="subunit">
    <text evidence="2 11 12 13 14 15 19 20 25 28 29 30 31 32">Homodimer (PubMed:19173286). Forms a stable complex with E2F1, BB1 and HDAC1 (PubMed:10888886). Forms a complex with DMAP1 and HDAC2, with direct interaction (PubMed:10888872). Interacts with the PRC2/EED-EZH2 complex (PubMed:16357870). Probably part of a corepressor complex containing ZNF304, TRIM28, SETDB1 and DNMT1 (PubMed:24623306). Interacts with UHRF1; promoting its recruitment to hemimethylated DNA (PubMed:21745816). Interacts with USP7, promoting its deubiquitination (PubMed:21745816). Interacts with PCNA (PubMed:9302295). Interacts with MBD2 and MBD3 (PubMed:10947852). Interacts with DNMT3A and DNMT3B (PubMed:12145218). Interacts with UBC9 (PubMed:19450230). Interacts with CSNK1D (By similarity). Interacts with HDAC1 (By similarity). Interacts with BAZ2A/TIP5 (By similarity). Interacts with SIRT7 (By similarity). Interacts with ZNF263; recruited to the SIX3 promoter along with other proteins involved in chromatin modification and transcriptional corepression where it contributes to transcriptional repression (PubMed:32051553). Interacts with L3MBTL3 and DCAF5; the interaction requires DNMT1 methylation at Lys-142 and is necessary to target DNMT1 for ubiquitination by the CRL4-DCAF5 E3 ubiquitin ligase complex and proteasomal degradation (PubMed:29691401). Interacts with PHF20L1; the interaction requires DNMT1 methylation at Lys-142 and protects DNMT1 from ubiquitination and proteasomal degradation (PubMed:24492612).</text>
</comment>
<comment type="interaction">
    <interactant intactId="EBI-719459">
        <id>P26358</id>
    </interactant>
    <interactant intactId="EBI-296087">
        <id>P31749</id>
        <label>AKT1</label>
    </interactant>
    <organismsDiffer>false</organismsDiffer>
    <experiments>6</experiments>
</comment>
<comment type="interaction">
    <interactant intactId="EBI-719459">
        <id>P26358</id>
    </interactant>
    <interactant intactId="EBI-491549">
        <id>P35222</id>
        <label>CTNNB1</label>
    </interactant>
    <organismsDiffer>false</organismsDiffer>
    <experiments>8</experiments>
</comment>
<comment type="interaction">
    <interactant intactId="EBI-719459">
        <id>P26358</id>
    </interactant>
    <interactant intactId="EBI-3253159">
        <id>Q96JK2</id>
        <label>DCAF5</label>
    </interactant>
    <organismsDiffer>false</organismsDiffer>
    <experiments>5</experiments>
</comment>
<comment type="interaction">
    <interactant intactId="EBI-719459">
        <id>P26358</id>
    </interactant>
    <interactant intactId="EBI-923794">
        <id>O75530</id>
        <label>EED</label>
    </interactant>
    <organismsDiffer>false</organismsDiffer>
    <experiments>3</experiments>
</comment>
<comment type="interaction">
    <interactant intactId="EBI-719459">
        <id>P26358</id>
    </interactant>
    <interactant intactId="EBI-530054">
        <id>Q15910</id>
        <label>EZH2</label>
    </interactant>
    <organismsDiffer>false</organismsDiffer>
    <experiments>8</experiments>
</comment>
<comment type="interaction">
    <interactant intactId="EBI-719459">
        <id>P26358</id>
    </interactant>
    <interactant intactId="EBI-2686809">
        <id>Q96JM7</id>
        <label>L3MBTL3</label>
    </interactant>
    <organismsDiffer>false</organismsDiffer>
    <experiments>11</experiments>
</comment>
<comment type="interaction">
    <interactant intactId="EBI-719459">
        <id>P26358</id>
    </interactant>
    <interactant intactId="EBI-746484">
        <id>P48552</id>
        <label>NRIP1</label>
    </interactant>
    <organismsDiffer>false</organismsDiffer>
    <experiments>3</experiments>
</comment>
<comment type="interaction">
    <interactant intactId="EBI-719459">
        <id>P26358</id>
    </interactant>
    <interactant intactId="EBI-355676">
        <id>P09874</id>
        <label>PARP1</label>
    </interactant>
    <organismsDiffer>false</organismsDiffer>
    <experiments>6</experiments>
</comment>
<comment type="interaction">
    <interactant intactId="EBI-719459">
        <id>P26358</id>
    </interactant>
    <interactant intactId="EBI-79165">
        <id>Q9NRD5</id>
        <label>PICK1</label>
    </interactant>
    <organismsDiffer>false</organismsDiffer>
    <experiments>2</experiments>
</comment>
<comment type="interaction">
    <interactant intactId="EBI-719459">
        <id>P26358</id>
    </interactant>
    <interactant intactId="EBI-1268586">
        <id>Q8WTS6</id>
        <label>SETD7</label>
    </interactant>
    <organismsDiffer>false</organismsDiffer>
    <experiments>9</experiments>
</comment>
<comment type="interaction">
    <interactant intactId="EBI-719459">
        <id>P26358</id>
    </interactant>
    <interactant intactId="EBI-1802965">
        <id>Q96EB6</id>
        <label>SIRT1</label>
    </interactant>
    <organismsDiffer>false</organismsDiffer>
    <experiments>11</experiments>
</comment>
<comment type="interaction">
    <interactant intactId="EBI-719459">
        <id>P26358</id>
    </interactant>
    <interactant intactId="EBI-1548946">
        <id>Q96T88</id>
        <label>UHRF1</label>
    </interactant>
    <organismsDiffer>false</organismsDiffer>
    <experiments>12</experiments>
</comment>
<comment type="interaction">
    <interactant intactId="EBI-719459">
        <id>P26358</id>
    </interactant>
    <interactant intactId="EBI-347088">
        <id>P63104</id>
        <label>YWHAZ</label>
    </interactant>
    <organismsDiffer>false</organismsDiffer>
    <experiments>2</experiments>
</comment>
<comment type="interaction">
    <interactant intactId="EBI-719459">
        <id>P26358</id>
    </interactant>
    <interactant intactId="EBI-2608731">
        <id>Q77UV9</id>
        <label>KIE-2</label>
    </interactant>
    <organismsDiffer>true</organismsDiffer>
    <experiments>2</experiments>
</comment>
<comment type="interaction">
    <interactant intactId="EBI-719459">
        <id>P26358</id>
    </interactant>
    <interactant intactId="EBI-15602554">
        <id>Q9QR71</id>
        <label>LANA1</label>
    </interactant>
    <organismsDiffer>true</organismsDiffer>
    <experiments>2</experiments>
</comment>
<comment type="subcellular location">
    <subcellularLocation>
        <location evidence="14 28">Nucleus</location>
    </subcellularLocation>
    <text evidence="28">Localized to the perinucleolar region.</text>
</comment>
<comment type="alternative products">
    <event type="alternative splicing"/>
    <isoform>
        <id>P26358-1</id>
        <name>1</name>
        <sequence type="displayed"/>
    </isoform>
    <isoform>
        <id>P26358-2</id>
        <name>2</name>
        <name>Dnmt1b</name>
        <sequence type="described" ref="VSP_005618"/>
    </isoform>
    <isoform>
        <id>P26358-3</id>
        <name>3</name>
        <sequence type="described" ref="VSP_005617"/>
    </isoform>
</comment>
<comment type="tissue specificity">
    <text evidence="10">Ubiquitous; highly expressed in fetal tissues, heart, kidney, placenta, peripheral blood mononuclear cells, and expressed at lower levels in spleen, lung, brain, small intestine, colon, liver, and skeletal muscle. Isoform 2 is less expressed than isoform 1.</text>
</comment>
<comment type="induction">
    <text>Its abundance is reduced to non detectable levels at the G0 phase of the cell cycle and is dramatically induced upon entrance into the S-phase of the cell cycle.</text>
</comment>
<comment type="domain">
    <text>The N-terminal part is required for homodimerization and acts as a regulatory domain.</text>
</comment>
<comment type="domain">
    <text evidence="22">The CXXC-type zinc finger specifically binds to unmethylated CpG dinucleotides, positioning the autoinhibitory linker between the DNA and the active site, thus providing a mechanism to ensure that only hemimethylated CpG dinucleotides undergo methylation.</text>
</comment>
<comment type="PTM">
    <text evidence="20">Sumoylated; sumoylation increases activity.</text>
</comment>
<comment type="PTM">
    <text evidence="26">Acetylation on multiple lysines, mainly by KAT2B/PCAF, regulates cell cycle G(2)/M transition. Deacetylation of Lys-1349 and Lys-1415 by SIRT1 increases methyltransferase activity.</text>
</comment>
<comment type="PTM">
    <text evidence="21 24">Phosphorylation of Ser-154 by CDKs is important for enzymatic activity and protein stability. Phosphorylation of Ser-143 by AKT1 prevents methylation by SETD7 thereby increasing DNMT1 stability.</text>
</comment>
<comment type="PTM">
    <text evidence="17 21 28 30">Methylation at Lys-142 by SETD7 is necessary for the regulation of DNMT1 proteasomal degradation.</text>
</comment>
<comment type="PTM">
    <text evidence="2">Ubiquitinated by UHRF1; interaction with USP7 counteracts ubiquitination by UHRF1 by promoting deubiquitination and preventing degradation by the proteasome.</text>
</comment>
<comment type="disease" evidence="23">
    <disease id="DI-03189">
        <name>Neuropathy, hereditary sensory, 1E</name>
        <acronym>HSN1E</acronym>
        <description>A neurodegenerative disorder characterized by adult onset of progressive peripheral sensory loss associated with progressive hearing impairment and early-onset dementia.</description>
        <dbReference type="MIM" id="614116"/>
    </disease>
    <text>The disease is caused by variants affecting the gene represented in this entry.</text>
</comment>
<comment type="disease" evidence="27">
    <disease id="DI-03793">
        <name>Cerebellar ataxia, deafness, and narcolepsy, autosomal dominant</name>
        <acronym>ADCADN</acronym>
        <description>An autosomal dominant neurologic disorder characterized by adult onset of progressive cerebellar ataxia, narcolepsy, cataplexy, sensorineural deafness, and dementia. More variable features include optic atrophy, sensory neuropathy, psychosis, and depression.</description>
        <dbReference type="MIM" id="604121"/>
    </disease>
    <text>The disease is caused by variants affecting the gene represented in this entry.</text>
</comment>
<comment type="similarity">
    <text evidence="6">Belongs to the class I-like SAM-binding methyltransferase superfamily. C5-methyltransferase family.</text>
</comment>
<comment type="sequence caution" evidence="35">
    <conflict type="erroneous gene model prediction">
        <sequence resource="EMBL-CDS" id="AAD54507"/>
    </conflict>
</comment>
<comment type="online information" name="Atlas of Genetics and Cytogenetics in Oncology and Haematology">
    <link uri="https://atlasgeneticsoncology.org/gene/40347/DNMT1"/>
</comment>
<name>DNMT1_HUMAN</name>
<reference key="1">
    <citation type="journal article" date="1992" name="Nucleic Acids Res.">
        <title>Isolation and characterization of the cDNA encoding human DNA methyltransferase.</title>
        <authorList>
            <person name="Yen R.-W.C."/>
            <person name="Vertino P.M."/>
            <person name="Nelkin B.D."/>
            <person name="Yu J.J."/>
            <person name="Deiry W.E."/>
            <person name="Cumaraswamy A."/>
            <person name="Lennon G.G."/>
            <person name="Trask B.J."/>
            <person name="Celano P."/>
            <person name="Baylin S.B."/>
        </authorList>
    </citation>
    <scope>NUCLEOTIDE SEQUENCE [MRNA] (ISOFORM 1)</scope>
</reference>
<reference key="2">
    <citation type="journal article" date="1996" name="J. Biol. Chem.">
        <title>New 5' regions of the murine and human genes for DNA (cytosine-5)-methyltransferase.</title>
        <authorList>
            <person name="Yoder J.A."/>
            <person name="Yen R.-W.C."/>
            <person name="Vertino P.M."/>
            <person name="Bestor T.H."/>
            <person name="Baylin S.B."/>
        </authorList>
    </citation>
    <scope>SEQUENCE REVISION TO N-TERMINUS</scope>
</reference>
<reference key="3">
    <citation type="submission" date="1999-08" db="EMBL/GenBank/DDBJ databases">
        <title>Human DNA methyltransferase (DNMT1) is alternatively spliced.</title>
        <authorList>
            <person name="Li L.C."/>
            <person name="Au H."/>
            <person name="Chui R."/>
            <person name="Dahiya R."/>
        </authorList>
    </citation>
    <scope>NUCLEOTIDE SEQUENCE [MRNA] (ISOFORM 3)</scope>
    <source>
        <tissue>Prostatic carcinoma</tissue>
    </source>
</reference>
<reference key="4">
    <citation type="journal article" date="2004" name="Nature">
        <title>The DNA sequence and biology of human chromosome 19.</title>
        <authorList>
            <person name="Grimwood J."/>
            <person name="Gordon L.A."/>
            <person name="Olsen A.S."/>
            <person name="Terry A."/>
            <person name="Schmutz J."/>
            <person name="Lamerdin J.E."/>
            <person name="Hellsten U."/>
            <person name="Goodstein D."/>
            <person name="Couronne O."/>
            <person name="Tran-Gyamfi M."/>
            <person name="Aerts A."/>
            <person name="Altherr M."/>
            <person name="Ashworth L."/>
            <person name="Bajorek E."/>
            <person name="Black S."/>
            <person name="Branscomb E."/>
            <person name="Caenepeel S."/>
            <person name="Carrano A.V."/>
            <person name="Caoile C."/>
            <person name="Chan Y.M."/>
            <person name="Christensen M."/>
            <person name="Cleland C.A."/>
            <person name="Copeland A."/>
            <person name="Dalin E."/>
            <person name="Dehal P."/>
            <person name="Denys M."/>
            <person name="Detter J.C."/>
            <person name="Escobar J."/>
            <person name="Flowers D."/>
            <person name="Fotopulos D."/>
            <person name="Garcia C."/>
            <person name="Georgescu A.M."/>
            <person name="Glavina T."/>
            <person name="Gomez M."/>
            <person name="Gonzales E."/>
            <person name="Groza M."/>
            <person name="Hammon N."/>
            <person name="Hawkins T."/>
            <person name="Haydu L."/>
            <person name="Ho I."/>
            <person name="Huang W."/>
            <person name="Israni S."/>
            <person name="Jett J."/>
            <person name="Kadner K."/>
            <person name="Kimball H."/>
            <person name="Kobayashi A."/>
            <person name="Larionov V."/>
            <person name="Leem S.-H."/>
            <person name="Lopez F."/>
            <person name="Lou Y."/>
            <person name="Lowry S."/>
            <person name="Malfatti S."/>
            <person name="Martinez D."/>
            <person name="McCready P.M."/>
            <person name="Medina C."/>
            <person name="Morgan J."/>
            <person name="Nelson K."/>
            <person name="Nolan M."/>
            <person name="Ovcharenko I."/>
            <person name="Pitluck S."/>
            <person name="Pollard M."/>
            <person name="Popkie A.P."/>
            <person name="Predki P."/>
            <person name="Quan G."/>
            <person name="Ramirez L."/>
            <person name="Rash S."/>
            <person name="Retterer J."/>
            <person name="Rodriguez A."/>
            <person name="Rogers S."/>
            <person name="Salamov A."/>
            <person name="Salazar A."/>
            <person name="She X."/>
            <person name="Smith D."/>
            <person name="Slezak T."/>
            <person name="Solovyev V."/>
            <person name="Thayer N."/>
            <person name="Tice H."/>
            <person name="Tsai M."/>
            <person name="Ustaszewska A."/>
            <person name="Vo N."/>
            <person name="Wagner M."/>
            <person name="Wheeler J."/>
            <person name="Wu K."/>
            <person name="Xie G."/>
            <person name="Yang J."/>
            <person name="Dubchak I."/>
            <person name="Furey T.S."/>
            <person name="DeJong P."/>
            <person name="Dickson M."/>
            <person name="Gordon D."/>
            <person name="Eichler E.E."/>
            <person name="Pennacchio L.A."/>
            <person name="Richardson P."/>
            <person name="Stubbs L."/>
            <person name="Rokhsar D.S."/>
            <person name="Myers R.M."/>
            <person name="Rubin E.M."/>
            <person name="Lucas S.M."/>
        </authorList>
    </citation>
    <scope>NUCLEOTIDE SEQUENCE [LARGE SCALE GENOMIC DNA]</scope>
</reference>
<reference key="5">
    <citation type="journal article" date="2004" name="Genome Res.">
        <title>The status, quality, and expansion of the NIH full-length cDNA project: the Mammalian Gene Collection (MGC).</title>
        <authorList>
            <consortium name="The MGC Project Team"/>
        </authorList>
    </citation>
    <scope>NUCLEOTIDE SEQUENCE [LARGE SCALE MRNA] (ISOFORM 2)</scope>
</reference>
<reference key="6">
    <citation type="journal article" date="1999" name="Proc. Natl. Acad. Sci. U.S.A.">
        <title>Two major forms of DNA (cytosine-5) methyltransferase in human somatic tissues.</title>
        <authorList>
            <person name="Hsu D.-W."/>
            <person name="Lin M.-J."/>
            <person name="Lee T.-L."/>
            <person name="Wen S.-C."/>
            <person name="Chen X."/>
            <person name="Shen C.-K.J."/>
        </authorList>
    </citation>
    <scope>PARTIAL NUCLEOTIDE SEQUENCE [GENOMIC DNA] (ISOFORM 2)</scope>
</reference>
<reference key="7">
    <citation type="journal article" date="2000" name="J. Biol. Chem.">
        <title>Characterization of the human DNA methyltransferase splice variant Dnmt1b.</title>
        <authorList>
            <person name="Bonfils C."/>
            <person name="Beaulieu N."/>
            <person name="Chan E."/>
            <person name="Cotton-Montpetit J."/>
            <person name="MacLeod A.R."/>
        </authorList>
    </citation>
    <scope>PARTIAL NUCLEOTIDE SEQUENCE [GENOMIC DNA] (ISOFORM 2)</scope>
</reference>
<reference key="8">
    <citation type="journal article" date="1997" name="Science">
        <title>Human DNA-(cytosine-5) methyltransferase-PCNA complex as a target for p21WAF1.</title>
        <authorList>
            <person name="Chuang L.S.-H."/>
            <person name="Ian H.-I."/>
            <person name="Koh T.-W."/>
            <person name="Ng H.-H."/>
            <person name="Xu G."/>
            <person name="Li B.F.L."/>
        </authorList>
    </citation>
    <scope>INTERACTION WITH PCNA</scope>
    <scope>MUTAGENESIS OF ARG-163; GLN-164; THR-166; ILE-167; SER-169; HIS-170; PHE-171; ALA-172 AND LYS-173</scope>
</reference>
<reference key="9">
    <citation type="journal article" date="2000" name="Genes Cells">
        <title>MBD2-MBD3 complex binds to hemi-methylated DNA and forms a complex containing DNMT1 at the replication foci in late S phase.</title>
        <authorList>
            <person name="Tatematsu K."/>
            <person name="Yamazaki T."/>
            <person name="Ishikawa F."/>
        </authorList>
    </citation>
    <scope>INTERACTION WITH MBD2 AND MBD3</scope>
</reference>
<reference key="10">
    <citation type="journal article" date="2000" name="Nat. Genet.">
        <title>DNMT1 binds HDAC2 and a new co-repressor, DMAP1, to form a complex at replication foci.</title>
        <authorList>
            <person name="Rountree M.R."/>
            <person name="Bachman K.E."/>
            <person name="Baylin S.B."/>
        </authorList>
    </citation>
    <scope>INTERACTION WITH HDAC2 AND DMAP1</scope>
</reference>
<reference key="11">
    <citation type="journal article" date="2000" name="Nat. Genet.">
        <title>DNMT1 forms a complex with Rb, E2F1 and HDAC1 and represses transcription from E2F-responsive promoters.</title>
        <authorList>
            <person name="Robertson K.D."/>
            <person name="Ait-Si-Ali S."/>
            <person name="Yokochi T."/>
            <person name="Wade P.A."/>
            <person name="Jones P.L."/>
            <person name="Wolffe A.P."/>
        </authorList>
    </citation>
    <scope>INTERACTION WITH RB1; E2F1 AND HDAC1</scope>
</reference>
<reference key="12">
    <citation type="journal article" date="1999" name="Nucleic Acids Res.">
        <title>The human DNA methyltransferases (DNMTs) 1, 3a and 3b: coordinate mRNA expression in normal tissues and overexpression in tumors.</title>
        <authorList>
            <person name="Robertson K.D."/>
            <person name="Uzvolgyi E."/>
            <person name="Liang G."/>
            <person name="Talmadge C."/>
            <person name="Sumegi J."/>
            <person name="Gonzales F.A."/>
            <person name="Jones P.A."/>
        </authorList>
    </citation>
    <scope>TISSUE SPECIFICITY</scope>
</reference>
<reference key="13">
    <citation type="journal article" date="2002" name="EMBO J.">
        <title>Co-operation and communication between the human maintenance and de novo DNA (cytosine-5) methyltransferases.</title>
        <authorList>
            <person name="Kim G.-D."/>
            <person name="Ni J."/>
            <person name="Kelesoglu N."/>
            <person name="Roberts R.J."/>
            <person name="Pradhan S."/>
        </authorList>
    </citation>
    <scope>INTERACTION WITH DNMT3A AND DNMT3B</scope>
    <scope>SUBCELLULAR LOCATION</scope>
</reference>
<reference key="14">
    <citation type="journal article" date="2006" name="Cell">
        <title>Global, in vivo, and site-specific phosphorylation dynamics in signaling networks.</title>
        <authorList>
            <person name="Olsen J.V."/>
            <person name="Blagoev B."/>
            <person name="Gnad F."/>
            <person name="Macek B."/>
            <person name="Kumar C."/>
            <person name="Mortensen P."/>
            <person name="Mann M."/>
        </authorList>
    </citation>
    <scope>PHOSPHORYLATION [LARGE SCALE ANALYSIS] AT SER-127 AND SER-714</scope>
    <scope>IDENTIFICATION BY MASS SPECTROMETRY [LARGE SCALE ANALYSIS]</scope>
    <source>
        <tissue>Cervix carcinoma</tissue>
    </source>
</reference>
<reference key="15">
    <citation type="journal article" date="2006" name="Nature">
        <title>The Polycomb group protein EZH2 directly controls DNA methylation.</title>
        <authorList>
            <person name="Vire E."/>
            <person name="Brenner C."/>
            <person name="Deplus R."/>
            <person name="Blanchon L."/>
            <person name="Fraga M."/>
            <person name="Didelot C."/>
            <person name="Morey L."/>
            <person name="Van Eynde A."/>
            <person name="Bernard D."/>
            <person name="Vanderwinden J.-M."/>
            <person name="Bollen M."/>
            <person name="Esteller M."/>
            <person name="Di Croce L."/>
            <person name="de Launoit Y."/>
            <person name="Fuks F."/>
        </authorList>
    </citation>
    <scope>FUNCTION</scope>
    <scope>INTERACTION WITH EED AND EZH2</scope>
</reference>
<reference key="16">
    <citation type="journal article" date="2006" name="Nature">
        <authorList>
            <person name="Vire E."/>
            <person name="Brenner C."/>
            <person name="Deplus R."/>
            <person name="Blanchon L."/>
            <person name="Fraga M."/>
            <person name="Didelot C."/>
            <person name="Morey L."/>
            <person name="Van Eynde A."/>
            <person name="Bernard D."/>
            <person name="Vanderwinden J.-M."/>
            <person name="Bollen M."/>
            <person name="Esteller M."/>
            <person name="Di Croce L."/>
            <person name="de Launoit Y."/>
            <person name="Fuks F."/>
        </authorList>
    </citation>
    <scope>ERRATUM OF PUBMED:16357870</scope>
</reference>
<reference key="17">
    <citation type="journal article" date="2007" name="Nat. Genet.">
        <title>Polycomb-mediated methylation on Lys27 of histone H3 pre-marks genes for de novo methylation in cancer.</title>
        <authorList>
            <person name="Schlesinger Y."/>
            <person name="Straussman R."/>
            <person name="Keshet I."/>
            <person name="Farkash S."/>
            <person name="Hecht M."/>
            <person name="Zimmerman J."/>
            <person name="Eden E."/>
            <person name="Yakhini Z."/>
            <person name="Ben-Shushan E."/>
            <person name="Reubinoff B.E."/>
            <person name="Bergman Y."/>
            <person name="Simon I."/>
            <person name="Cedar H."/>
        </authorList>
    </citation>
    <scope>DE NOVO DNA METHYLATION OF TARGET GENES</scope>
</reference>
<reference key="18">
    <citation type="journal article" date="2008" name="Biochemistry">
        <title>CXXC domain of human DNMT1 is essential for enzymatic activity.</title>
        <authorList>
            <person name="Pradhan M."/>
            <person name="Esteve P.-O."/>
            <person name="Chin H.G."/>
            <person name="Samaranayke M."/>
            <person name="Kim G.-D."/>
            <person name="Pradhan S."/>
        </authorList>
    </citation>
    <scope>FUNCTION</scope>
    <scope>MUTAGENESIS OF CYS-653; CYS-656; CYS-659; CYS-664; CYS-667 AND CYS-670</scope>
</reference>
<reference key="19">
    <citation type="journal article" date="2008" name="Cancer Res.">
        <title>DNA methyltransferase 1 and 3B activate BAG-1 expression via recruitment of CTCFL/BORIS and modulation of promoter histone methylation.</title>
        <authorList>
            <person name="Sun L."/>
            <person name="Huang L."/>
            <person name="Nguyen P."/>
            <person name="Bisht K.S."/>
            <person name="Bar-Sela G."/>
            <person name="Ho A.S."/>
            <person name="Bradbury C.M."/>
            <person name="Yu W."/>
            <person name="Cui H."/>
            <person name="Lee S."/>
            <person name="Trepel J.B."/>
            <person name="Feinberg A.P."/>
            <person name="Gius D."/>
        </authorList>
    </citation>
    <scope>FUNCTION</scope>
</reference>
<reference key="20">
    <citation type="journal article" date="2008" name="J. Proteome Res.">
        <title>Combining protein-based IMAC, peptide-based IMAC, and MudPIT for efficient phosphoproteomic analysis.</title>
        <authorList>
            <person name="Cantin G.T."/>
            <person name="Yi W."/>
            <person name="Lu B."/>
            <person name="Park S.K."/>
            <person name="Xu T."/>
            <person name="Lee J.-D."/>
            <person name="Yates J.R. III"/>
        </authorList>
    </citation>
    <scope>PHOSPHORYLATION [LARGE SCALE ANALYSIS] AT SER-732</scope>
    <scope>IDENTIFICATION BY MASS SPECTROMETRY [LARGE SCALE ANALYSIS]</scope>
    <source>
        <tissue>Cervix carcinoma</tissue>
    </source>
</reference>
<reference key="21">
    <citation type="journal article" date="2008" name="Nat. Chem. Biol.">
        <title>Protein lysine methyltransferase G9a acts on non-histone targets.</title>
        <authorList>
            <person name="Rathert P."/>
            <person name="Dhayalan A."/>
            <person name="Murakami M."/>
            <person name="Zhang X."/>
            <person name="Tamas R."/>
            <person name="Jurkowska R."/>
            <person name="Komatsu Y."/>
            <person name="Shinkai Y."/>
            <person name="Cheng X."/>
            <person name="Jeltsch A."/>
        </authorList>
    </citation>
    <scope>METHYLATION AT LYS-70</scope>
    <scope>IDENTIFICATION BY MASS SPECTROMETRY</scope>
</reference>
<reference key="22">
    <citation type="journal article" date="2008" name="Proc. Natl. Acad. Sci. U.S.A.">
        <title>A quantitative atlas of mitotic phosphorylation.</title>
        <authorList>
            <person name="Dephoure N."/>
            <person name="Zhou C."/>
            <person name="Villen J."/>
            <person name="Beausoleil S.A."/>
            <person name="Bakalarski C.E."/>
            <person name="Elledge S.J."/>
            <person name="Gygi S.P."/>
        </authorList>
    </citation>
    <scope>PHOSPHORYLATION [LARGE SCALE ANALYSIS] AT SER-127; SER-143; SER-152; SER-154 AND SER-394</scope>
    <scope>IDENTIFICATION BY MASS SPECTROMETRY [LARGE SCALE ANALYSIS]</scope>
    <source>
        <tissue>Cervix carcinoma</tissue>
    </source>
</reference>
<reference key="23">
    <citation type="journal article" date="2009" name="Anal. Chem.">
        <title>Lys-N and trypsin cover complementary parts of the phosphoproteome in a refined SCX-based approach.</title>
        <authorList>
            <person name="Gauci S."/>
            <person name="Helbig A.O."/>
            <person name="Slijper M."/>
            <person name="Krijgsveld J."/>
            <person name="Heck A.J."/>
            <person name="Mohammed S."/>
        </authorList>
    </citation>
    <scope>IDENTIFICATION BY MASS SPECTROMETRY [LARGE SCALE ANALYSIS]</scope>
</reference>
<reference key="24">
    <citation type="journal article" date="2009" name="Biochem. J.">
        <title>SUMOylation enhances DNA methyltransferase 1 activity.</title>
        <authorList>
            <person name="Lee B."/>
            <person name="Muller M.T."/>
        </authorList>
    </citation>
    <scope>SUMOYLATION</scope>
    <scope>INTERACTION WITH UBC9</scope>
    <scope>MUTAGENESIS OF CYS-1226</scope>
</reference>
<reference key="25">
    <citation type="journal article" date="2009" name="J. Cell. Biochem.">
        <title>Dimerization of DNA methyltransferase 1 is mediated by its regulatory domain.</title>
        <authorList>
            <person name="Fellinger K."/>
            <person name="Rothbauer U."/>
            <person name="Felle M."/>
            <person name="Laengst G."/>
            <person name="Leonhardt H."/>
        </authorList>
    </citation>
    <scope>HOMODIMERIZATION</scope>
</reference>
<reference key="26">
    <citation type="journal article" date="2009" name="Sci. Signal.">
        <title>Quantitative phosphoproteomic analysis of T cell receptor signaling reveals system-wide modulation of protein-protein interactions.</title>
        <authorList>
            <person name="Mayya V."/>
            <person name="Lundgren D.H."/>
            <person name="Hwang S.-I."/>
            <person name="Rezaul K."/>
            <person name="Wu L."/>
            <person name="Eng J.K."/>
            <person name="Rodionov V."/>
            <person name="Han D.K."/>
        </authorList>
    </citation>
    <scope>PHOSPHORYLATION [LARGE SCALE ANALYSIS] AT SER-127</scope>
    <scope>IDENTIFICATION BY MASS SPECTROMETRY [LARGE SCALE ANALYSIS]</scope>
    <source>
        <tissue>Leukemic T-cell</tissue>
    </source>
</reference>
<reference key="27">
    <citation type="journal article" date="2009" name="Science">
        <title>Lysine acetylation targets protein complexes and co-regulates major cellular functions.</title>
        <authorList>
            <person name="Choudhary C."/>
            <person name="Kumar C."/>
            <person name="Gnad F."/>
            <person name="Nielsen M.L."/>
            <person name="Rehman M."/>
            <person name="Walther T.C."/>
            <person name="Olsen J.V."/>
            <person name="Mann M."/>
        </authorList>
    </citation>
    <scope>ACETYLATION [LARGE SCALE ANALYSIS] AT LYS-173; LYS-1111; LYS-1113 AND LYS-1115</scope>
    <scope>IDENTIFICATION BY MASS SPECTROMETRY [LARGE SCALE ANALYSIS]</scope>
</reference>
<reference key="28">
    <citation type="journal article" date="2010" name="Sci. Signal.">
        <title>Quantitative phosphoproteomics reveals widespread full phosphorylation site occupancy during mitosis.</title>
        <authorList>
            <person name="Olsen J.V."/>
            <person name="Vermeulen M."/>
            <person name="Santamaria A."/>
            <person name="Kumar C."/>
            <person name="Miller M.L."/>
            <person name="Jensen L.J."/>
            <person name="Gnad F."/>
            <person name="Cox J."/>
            <person name="Jensen T.S."/>
            <person name="Nigg E.A."/>
            <person name="Brunak S."/>
            <person name="Mann M."/>
        </authorList>
    </citation>
    <scope>PHOSPHORYLATION [LARGE SCALE ANALYSIS] AT SER-394 AND SER-714</scope>
    <scope>IDENTIFICATION BY MASS SPECTROMETRY [LARGE SCALE ANALYSIS]</scope>
    <source>
        <tissue>Cervix carcinoma</tissue>
    </source>
</reference>
<reference key="29">
    <citation type="journal article" date="2011" name="BMC Syst. Biol.">
        <title>Initial characterization of the human central proteome.</title>
        <authorList>
            <person name="Burkard T.R."/>
            <person name="Planyavsky M."/>
            <person name="Kaupe I."/>
            <person name="Breitwieser F.P."/>
            <person name="Buerckstuemmer T."/>
            <person name="Bennett K.L."/>
            <person name="Superti-Furga G."/>
            <person name="Colinge J."/>
        </authorList>
    </citation>
    <scope>IDENTIFICATION BY MASS SPECTROMETRY [LARGE SCALE ANALYSIS]</scope>
</reference>
<reference key="30">
    <citation type="journal article" date="2011" name="Biochem. Biophys. Res. Commun.">
        <title>Phosphorylation of human DNMT1: implication of cyclin-dependent kinases.</title>
        <authorList>
            <person name="Lavoie G."/>
            <person name="St-Pierre Y."/>
        </authorList>
    </citation>
    <scope>PHOSPHORYLATION AT SER-154</scope>
</reference>
<reference key="31">
    <citation type="journal article" date="2011" name="Mol. Cell. Biol.">
        <title>SIRT1 deacetylates the DNA methyltransferase 1 (DNMT1) protein and alters its activities.</title>
        <authorList>
            <person name="Peng L."/>
            <person name="Yuan Z."/>
            <person name="Ling H."/>
            <person name="Fukasawa K."/>
            <person name="Robertson K."/>
            <person name="Olashaw N."/>
            <person name="Koomen J."/>
            <person name="Chen J."/>
            <person name="Lane W.S."/>
            <person name="Seto E."/>
        </authorList>
    </citation>
    <scope>ACETYLATION AT LYS-160; LYS-188; LYS-259; LYS-366; LYS-749; LYS-891; LYS-957; LYS-961; LYS-975; LYS-1054; LYS-1111; LYS-1113; LYS-1115; LYS-1117; LYS-1349 AND LYS-1415</scope>
    <scope>DEACETYLATION BY SIRT1</scope>
</reference>
<reference key="32">
    <citation type="journal article" date="2011" name="Nat. Struct. Mol. Biol.">
        <title>A methylation and phosphorylation switch between an adjacent lysine and serine determines human DNMT1 stability.</title>
        <authorList>
            <person name="Esteve P.O."/>
            <person name="Chang Y."/>
            <person name="Samaranayake M."/>
            <person name="Upadhyay A.K."/>
            <person name="Horton J.R."/>
            <person name="Feehery G.R."/>
            <person name="Cheng X."/>
            <person name="Pradhan S."/>
        </authorList>
    </citation>
    <scope>METHYLATION AT LYS-142</scope>
    <scope>PHOSPHORYLATION AT SER-143</scope>
</reference>
<reference key="33">
    <citation type="journal article" date="2011" name="Nucleic Acids Res.">
        <title>The USP7/Dnmt1 complex stimulates the DNA methylation activity of Dnmt1 and regulates the stability of UHRF1.</title>
        <authorList>
            <person name="Felle M."/>
            <person name="Joppien S."/>
            <person name="Nemeth A."/>
            <person name="Diermeier S."/>
            <person name="Thalhammer V."/>
            <person name="Dobner T."/>
            <person name="Kremmer E."/>
            <person name="Kappler R."/>
            <person name="Langst G."/>
        </authorList>
    </citation>
    <scope>INTERACTION WITH USP7 AND UHRF1</scope>
</reference>
<reference key="34">
    <citation type="journal article" date="2011" name="Sci. Signal.">
        <title>System-wide temporal characterization of the proteome and phosphoproteome of human embryonic stem cell differentiation.</title>
        <authorList>
            <person name="Rigbolt K.T."/>
            <person name="Prokhorova T.A."/>
            <person name="Akimov V."/>
            <person name="Henningsen J."/>
            <person name="Johansen P.T."/>
            <person name="Kratchmarova I."/>
            <person name="Kassem M."/>
            <person name="Mann M."/>
            <person name="Olsen J.V."/>
            <person name="Blagoev B."/>
        </authorList>
    </citation>
    <scope>PHOSPHORYLATION [LARGE SCALE ANALYSIS] AT SER-127; SER-133 AND SER-714</scope>
    <scope>IDENTIFICATION BY MASS SPECTROMETRY [LARGE SCALE ANALYSIS]</scope>
</reference>
<reference key="35">
    <citation type="journal article" date="2013" name="J. Proteome Res.">
        <title>Toward a comprehensive characterization of a human cancer cell phosphoproteome.</title>
        <authorList>
            <person name="Zhou H."/>
            <person name="Di Palma S."/>
            <person name="Preisinger C."/>
            <person name="Peng M."/>
            <person name="Polat A.N."/>
            <person name="Heck A.J."/>
            <person name="Mohammed S."/>
        </authorList>
    </citation>
    <scope>PHOSPHORYLATION [LARGE SCALE ANALYSIS] AT SER-127; THR-137; SER-143; SER-154; THR-166; SER-312; SER-394; SER-398; SER-549; SER-714 AND SER-878</scope>
    <scope>IDENTIFICATION BY MASS SPECTROMETRY [LARGE SCALE ANALYSIS]</scope>
    <source>
        <tissue>Cervix carcinoma</tissue>
        <tissue>Erythroleukemia</tissue>
    </source>
</reference>
<reference key="36">
    <citation type="journal article" date="2014" name="Elife">
        <title>A KRAS-directed transcriptional silencing pathway that mediates the CpG island methylator phenotype.</title>
        <authorList>
            <person name="Serra R.W."/>
            <person name="Fang M."/>
            <person name="Park S.M."/>
            <person name="Hutchinson L."/>
            <person name="Green M.R."/>
        </authorList>
    </citation>
    <scope>FUNCTION</scope>
    <scope>POSSIBLE IDENTIFICATION IN A COREPRESSOR COMPLEX</scope>
    <scope>CHROMATIN-BINDING</scope>
</reference>
<reference key="37">
    <citation type="journal article" date="2014" name="J. Biol. Chem.">
        <title>Methyllysine reader plant homeodomain (PHD) finger protein 20-like 1 (PHF20L1) antagonizes DNA (cytosine-5) methyltransferase 1 (DNMT1) proteasomal degradation.</title>
        <authorList>
            <person name="Esteve P.O."/>
            <person name="Terragni J."/>
            <person name="Deepti K."/>
            <person name="Chin H.G."/>
            <person name="Dai N."/>
            <person name="Espejo A."/>
            <person name="Correa I.R. Jr."/>
            <person name="Bedford M.T."/>
            <person name="Pradhan S."/>
        </authorList>
    </citation>
    <scope>SUBCELLULAR LOCATION</scope>
    <scope>INTERACTION WITH PHF20L1</scope>
</reference>
<reference key="38">
    <citation type="journal article" date="2014" name="J. Proteomics">
        <title>An enzyme assisted RP-RPLC approach for in-depth analysis of human liver phosphoproteome.</title>
        <authorList>
            <person name="Bian Y."/>
            <person name="Song C."/>
            <person name="Cheng K."/>
            <person name="Dong M."/>
            <person name="Wang F."/>
            <person name="Huang J."/>
            <person name="Sun D."/>
            <person name="Wang L."/>
            <person name="Ye M."/>
            <person name="Zou H."/>
        </authorList>
    </citation>
    <scope>IDENTIFICATION BY MASS SPECTROMETRY [LARGE SCALE ANALYSIS]</scope>
    <source>
        <tissue>Liver</tissue>
    </source>
</reference>
<reference key="39">
    <citation type="journal article" date="2015" name="Cell Rep.">
        <title>SUMO-2 orchestrates chromatin modifiers in response to DNA damage.</title>
        <authorList>
            <person name="Hendriks I.A."/>
            <person name="Treffers L.W."/>
            <person name="Verlaan-de Vries M."/>
            <person name="Olsen J.V."/>
            <person name="Vertegaal A.C."/>
        </authorList>
    </citation>
    <scope>SUMOYLATION [LARGE SCALE ANALYSIS] AT LYS-1609</scope>
    <scope>IDENTIFICATION BY MASS SPECTROMETRY [LARGE SCALE ANALYSIS]</scope>
</reference>
<reference key="40">
    <citation type="journal article" date="2017" name="Nat. Struct. Mol. Biol.">
        <title>Site-specific mapping of the human SUMO proteome reveals co-modification with phosphorylation.</title>
        <authorList>
            <person name="Hendriks I.A."/>
            <person name="Lyon D."/>
            <person name="Young C."/>
            <person name="Jensen L.J."/>
            <person name="Vertegaal A.C."/>
            <person name="Nielsen M.L."/>
        </authorList>
    </citation>
    <scope>SUMOYLATION [LARGE SCALE ANALYSIS] AT LYS-259 AND LYS-1609</scope>
    <scope>IDENTIFICATION BY MASS SPECTROMETRY [LARGE SCALE ANALYSIS]</scope>
</reference>
<reference key="41">
    <citation type="journal article" date="2018" name="Nat. Commun.">
        <title>Methylated DNMT1 and E2F1 are targeted for proteolysis by L3MBTL3 and CRL4-DCAF5 ubiquitin ligase.</title>
        <authorList>
            <person name="Leng F."/>
            <person name="Yu J."/>
            <person name="Zhang C."/>
            <person name="Alejo S."/>
            <person name="Hoang N."/>
            <person name="Sun H."/>
            <person name="Lu F."/>
            <person name="Zhang H."/>
        </authorList>
    </citation>
    <scope>INTERACTION WITH DCAF5 AND L3MBTL3</scope>
    <scope>MUTAGENESIS OF LYS-142</scope>
</reference>
<reference key="42">
    <citation type="journal article" date="2020" name="Oncogene">
        <title>The EGFR-ZNF263 signaling axis silences SIX3 in glioblastoma epigenetically.</title>
        <authorList>
            <person name="Yu Z."/>
            <person name="Feng J."/>
            <person name="Wang W."/>
            <person name="Deng Z."/>
            <person name="Zhang Y."/>
            <person name="Xiao L."/>
            <person name="Wang Z."/>
            <person name="Liu C."/>
            <person name="Liu Q."/>
            <person name="Chen S."/>
            <person name="Wu M."/>
        </authorList>
    </citation>
    <scope>INTERACTION WITH ZNF263</scope>
</reference>
<reference key="43">
    <citation type="journal article" date="2011" name="J. Biol. Chem.">
        <title>The replication focus targeting sequence (RFTS) domain is a DNA-competitive inhibitor of Dnmt1.</title>
        <authorList>
            <person name="Syeda F."/>
            <person name="Fagan R.L."/>
            <person name="Wean M."/>
            <person name="Avvakumov G.V."/>
            <person name="Walker J.R."/>
            <person name="Xue S."/>
            <person name="Dhe-Paganon S."/>
            <person name="Brenner C."/>
        </authorList>
    </citation>
    <scope>X-RAY CRYSTALLOGRAPHY (2.31 ANGSTROMS) OF 351-600 IN COMPLEX WITH ZINC IONS</scope>
</reference>
<reference key="44">
    <citation type="journal article" date="2011" name="Science">
        <title>Structure of DNMT1-DNA complex reveals a role for autoinhibition in maintenance DNA methylation.</title>
        <authorList>
            <person name="Song J."/>
            <person name="Rechkoblit O."/>
            <person name="Bestor T.H."/>
            <person name="Patel D.J."/>
        </authorList>
    </citation>
    <scope>X-RAY CRYSTALLOGRAPHY (3.6 ANGSTROMS) OF 646-1600 IN COMPLEX WITH S-ADENOSYL-L-HOMOCYSTEINE AND DNA</scope>
    <scope>AUTOINHIBITORY LINKER</scope>
</reference>
<reference key="45">
    <citation type="journal article" date="2011" name="Nat. Genet.">
        <title>Mutations in DNMT1 cause hereditary sensory neuropathy with dementia and hearing loss.</title>
        <authorList>
            <person name="Klein C.J."/>
            <person name="Botuyan M.V."/>
            <person name="Wu Y."/>
            <person name="Ward C.J."/>
            <person name="Nicholson G.A."/>
            <person name="Hammans S."/>
            <person name="Hojo K."/>
            <person name="Yamanishi H."/>
            <person name="Karpf A.R."/>
            <person name="Wallace D.C."/>
            <person name="Simon M."/>
            <person name="Lander C."/>
            <person name="Boardman L.A."/>
            <person name="Cunningham J.M."/>
            <person name="Smith G.E."/>
            <person name="Litchy W.J."/>
            <person name="Boes B."/>
            <person name="Atkinson E.J."/>
            <person name="Middha S."/>
            <person name="Dyck P.J.B."/>
            <person name="Parisi J.E."/>
            <person name="Mer G."/>
            <person name="Smith D.I."/>
            <person name="Dyck P.J."/>
        </authorList>
    </citation>
    <scope>VARIANTS HSN1E 490-ASP-PRO-491 DELINS GLU-TYR AND CYS-495</scope>
    <scope>CHARACTERIZATION OF VARIANTS HSN1E 490-ASP-PRO-491 DELINS GLU-TYR AND CYS-495</scope>
</reference>
<reference key="46">
    <citation type="journal article" date="2012" name="Hum. Mol. Genet.">
        <title>Mutations in DNMT1 cause autosomal dominant cerebellar ataxia, deafness and narcolepsy.</title>
        <authorList>
            <person name="Winkelmann J."/>
            <person name="Lin L."/>
            <person name="Schormair B."/>
            <person name="Kornum B.R."/>
            <person name="Faraco J."/>
            <person name="Plazzi G."/>
            <person name="Melberg A."/>
            <person name="Cornelio F."/>
            <person name="Urban A.E."/>
            <person name="Pizza F."/>
            <person name="Poli F."/>
            <person name="Grubert F."/>
            <person name="Wieland T."/>
            <person name="Graf E."/>
            <person name="Hallmayer J."/>
            <person name="Strom T.M."/>
            <person name="Mignot E."/>
        </authorList>
    </citation>
    <scope>VARIANTS ADCADN VAL-554; ALA-589 AND PHE-590</scope>
</reference>
<protein>
    <recommendedName>
        <fullName>DNA (cytosine-5)-methyltransferase 1</fullName>
        <shortName>Dnmt1</shortName>
        <ecNumber>2.1.1.37</ecNumber>
    </recommendedName>
    <alternativeName>
        <fullName>CXXC-type zinc finger protein 9</fullName>
    </alternativeName>
    <alternativeName>
        <fullName>DNA methyltransferase HsaI</fullName>
        <shortName>DNA MTase HsaI</shortName>
        <shortName>M.HsaI</shortName>
    </alternativeName>
    <alternativeName>
        <fullName>MCMT</fullName>
    </alternativeName>
</protein>
<organism>
    <name type="scientific">Homo sapiens</name>
    <name type="common">Human</name>
    <dbReference type="NCBI Taxonomy" id="9606"/>
    <lineage>
        <taxon>Eukaryota</taxon>
        <taxon>Metazoa</taxon>
        <taxon>Chordata</taxon>
        <taxon>Craniata</taxon>
        <taxon>Vertebrata</taxon>
        <taxon>Euteleostomi</taxon>
        <taxon>Mammalia</taxon>
        <taxon>Eutheria</taxon>
        <taxon>Euarchontoglires</taxon>
        <taxon>Primates</taxon>
        <taxon>Haplorrhini</taxon>
        <taxon>Catarrhini</taxon>
        <taxon>Hominidae</taxon>
        <taxon>Homo</taxon>
    </lineage>
</organism>
<sequence length="1616" mass="183165">MPARTAPARVPTLAVPAISLPDDVRRRLKDLERDSLTEKECVKEKLNLLHEFLQTEIKNQLCDLETKLRKEELSEEGYLAKVKSLLNKDLSLENGAHAYNREVNGRLENGNQARSEARRVGMADANSPPKPLSKPRTPRRSKSDGEAKPEPSPSPRITRKSTRQTTITSHFAKGPAKRKPQEESERAKSDESIKEEDKDQDEKRRRVTSRERVARPLPAEEPERAKSGTRTEKEEERDEKEEKRLRSQTKEPTPKQKLKEEPDREARAGVQADEDEDGDEKDEKKHRSQPKDLAAKRRPEEKEPEKVNPQISDEKDEDEKEEKRRKTTPKEPTEKKMARAKTVMNSKTHPPKCIQCGQYLDDPDLKYGQHPPDAVDEPQMLTNEKLSIFDANESGFESYEALPQHKLTCFSVYCKHGHLCPIDTGLIEKNIELFFSGSAKPIYDDDPSLEGGVNGKNLGPINEWWITGFDGGEKALIGFSTSFAEYILMDPSPEYAPIFGLMQEKIYISKIVVEFLQSNSDSTYEDLINKIETTVPPSGLNLNRFTEDSLLRHAQFVVEQVESYDEAGDSDEQPIFLTPCMRDLIKLAGVTLGQRRAQARRQTIRHSTREKDRGPTKATTTKLVYQIFDTFFAEQIEKDDREDKENAFKRRRCGVCEVCQQPECGKCKACKDMVKFGGSGRSKQACQERRCPNMAMKEADDDEEVDDNIPEMPSPKKMHQGKKKKQNKNRISWVGEAVKTDGKKSYYKKVCIDAETLEVGDCVSVIPDDSSKPLYLARVTALWEDSSNGQMFHAHWFCAGTDTVLGATSDPLELFLVDECEDMQLSYIHSKVKVIYKAPSENWAMEGGMDPESLLEGDDGKTYFYQLWYDQDYARFESPPKTQPTEDNKFKFCVSCARLAEMRQKEIPRVLEQLEDLDSRVLYYSATKNGILYRVGDGVYLPPEAFTFNIKLSSPVKRPRKEPVDEDLYPEHYRKYSDYIKGSNLDAPEPYRIGRIKEIFCPKKSNGRPNETDIKIRVNKFYRPENTHKSTPASYHADINLLYWSDEEAVVDFKAVQGRCTVEYGEDLPECVQVYSMGGPNRFYFLEAYNAKSKSFEDPPNHARSPGNKGKGKGKGKGKPKSQACEPSEPEIEIKLPKLRTLDVFSGCGGLSEGFHQAGISDTLWAIEMWDPAAQAFRLNNPGSTVFTEDCNILLKLVMAGETTNSRGQRLPQKGDVEMLCGGPPCQGFSGMNRFNSRTYSKFKNSLVVSFLSYCDYYRPRFFLLENVRNFVSFKRSMVLKLTLRCLVRMGYQCTFGVLQAGQYGVAQTRRRAIILAAAPGEKLPLFPEPLHVFAPRACQLSVVVDDKKFVSNITRLSSGPFRTITVRDTMSDLPEVRNGASALEISYNGEPQSWFQRQLRGAQYQPILRDHICKDMSALVAARMRHIPLAPGSDWRDLPNIEVRLSDGTMARKLRYTHHDRKNGRSSSGALRGVCSCVEAGKACDPAARQFNTLIPWCLPHTGNRHNHWAGLYGRLEWDGFFSTTVTNPEPMGKQGRVLHPEQHRVVSVRECARSQGFPDTYRLFGNILDKHRQVGNAVPPPLAKAIGLEIKLCMLAKARESASAKIKEEEAAKD</sequence>